<keyword id="KW-0002">3D-structure</keyword>
<keyword id="KW-0007">Acetylation</keyword>
<keyword id="KW-0025">Alternative splicing</keyword>
<keyword id="KW-0067">ATP-binding</keyword>
<keyword id="KW-0156">Chromatin regulator</keyword>
<keyword id="KW-0963">Cytoplasm</keyword>
<keyword id="KW-0206">Cytoskeleton</keyword>
<keyword id="KW-0225">Disease variant</keyword>
<keyword id="KW-0238">DNA-binding</keyword>
<keyword id="KW-0378">Hydrolase</keyword>
<keyword id="KW-0991">Intellectual disability</keyword>
<keyword id="KW-1017">Isopeptide bond</keyword>
<keyword id="KW-0479">Metal-binding</keyword>
<keyword id="KW-0547">Nucleotide-binding</keyword>
<keyword id="KW-0539">Nucleus</keyword>
<keyword id="KW-0597">Phosphoprotein</keyword>
<keyword id="KW-1267">Proteomics identification</keyword>
<keyword id="KW-1185">Reference proteome</keyword>
<keyword id="KW-0677">Repeat</keyword>
<keyword id="KW-0804">Transcription</keyword>
<keyword id="KW-0805">Transcription regulation</keyword>
<keyword id="KW-0832">Ubl conjugation</keyword>
<keyword id="KW-0862">Zinc</keyword>
<keyword id="KW-0863">Zinc-finger</keyword>
<feature type="chain" id="PRO_0000080228" description="Chromodomain-helicase-DNA-binding protein 4">
    <location>
        <begin position="1"/>
        <end position="1912"/>
    </location>
</feature>
<feature type="domain" description="Chromo 1" evidence="3">
    <location>
        <begin position="494"/>
        <end position="594"/>
    </location>
</feature>
<feature type="domain" description="Chromo 2" evidence="3">
    <location>
        <begin position="622"/>
        <end position="697"/>
    </location>
</feature>
<feature type="domain" description="Helicase ATP-binding" evidence="5">
    <location>
        <begin position="738"/>
        <end position="922"/>
    </location>
</feature>
<feature type="domain" description="Helicase C-terminal" evidence="6">
    <location>
        <begin position="1054"/>
        <end position="1203"/>
    </location>
</feature>
<feature type="zinc finger region" description="PHD-type 1" evidence="4">
    <location>
        <begin position="370"/>
        <end position="417"/>
    </location>
</feature>
<feature type="zinc finger region" description="PHD-type 2" evidence="4">
    <location>
        <begin position="449"/>
        <end position="496"/>
    </location>
</feature>
<feature type="region of interest" description="Disordered" evidence="7">
    <location>
        <begin position="1"/>
        <end position="157"/>
    </location>
</feature>
<feature type="region of interest" description="Disordered" evidence="7">
    <location>
        <begin position="243"/>
        <end position="360"/>
    </location>
</feature>
<feature type="region of interest" description="Disordered" evidence="7">
    <location>
        <begin position="510"/>
        <end position="537"/>
    </location>
</feature>
<feature type="region of interest" description="Disordered" evidence="7">
    <location>
        <begin position="578"/>
        <end position="603"/>
    </location>
</feature>
<feature type="region of interest" description="Disordered" evidence="7">
    <location>
        <begin position="1344"/>
        <end position="1401"/>
    </location>
</feature>
<feature type="region of interest" description="Disordered" evidence="7">
    <location>
        <begin position="1525"/>
        <end position="1562"/>
    </location>
</feature>
<feature type="region of interest" description="Disordered" evidence="7">
    <location>
        <begin position="1570"/>
        <end position="1589"/>
    </location>
</feature>
<feature type="region of interest" description="Required for interaction with PCNT" evidence="14">
    <location>
        <begin position="1577"/>
        <end position="1912"/>
    </location>
</feature>
<feature type="region of interest" description="Disordered" evidence="7">
    <location>
        <begin position="1594"/>
        <end position="1644"/>
    </location>
</feature>
<feature type="short sequence motif" description="KIKL" evidence="23">
    <location>
        <begin position="295"/>
        <end position="298"/>
    </location>
</feature>
<feature type="short sequence motif" description="DEAH box">
    <location>
        <begin position="873"/>
        <end position="876"/>
    </location>
</feature>
<feature type="compositionally biased region" description="Acidic residues" evidence="7">
    <location>
        <begin position="35"/>
        <end position="45"/>
    </location>
</feature>
<feature type="compositionally biased region" description="Basic residues" evidence="7">
    <location>
        <begin position="113"/>
        <end position="131"/>
    </location>
</feature>
<feature type="compositionally biased region" description="Acidic residues" evidence="7">
    <location>
        <begin position="135"/>
        <end position="145"/>
    </location>
</feature>
<feature type="compositionally biased region" description="Acidic residues" evidence="7">
    <location>
        <begin position="311"/>
        <end position="323"/>
    </location>
</feature>
<feature type="compositionally biased region" description="Basic residues" evidence="7">
    <location>
        <begin position="340"/>
        <end position="353"/>
    </location>
</feature>
<feature type="compositionally biased region" description="Pro residues" evidence="7">
    <location>
        <begin position="513"/>
        <end position="522"/>
    </location>
</feature>
<feature type="compositionally biased region" description="Pro residues" evidence="7">
    <location>
        <begin position="1535"/>
        <end position="1544"/>
    </location>
</feature>
<feature type="compositionally biased region" description="Basic and acidic residues" evidence="7">
    <location>
        <begin position="1570"/>
        <end position="1584"/>
    </location>
</feature>
<feature type="compositionally biased region" description="Basic and acidic residues" evidence="7">
    <location>
        <begin position="1603"/>
        <end position="1644"/>
    </location>
</feature>
<feature type="binding site" evidence="5">
    <location>
        <begin position="751"/>
        <end position="758"/>
    </location>
    <ligand>
        <name>ATP</name>
        <dbReference type="ChEBI" id="CHEBI:30616"/>
    </ligand>
</feature>
<feature type="modified residue" description="Phosphoserine" evidence="42 43">
    <location>
        <position position="44"/>
    </location>
</feature>
<feature type="modified residue" description="Phosphoserine" evidence="43 44">
    <location>
        <position position="303"/>
    </location>
</feature>
<feature type="modified residue" description="Phosphoserine" evidence="43">
    <location>
        <position position="308"/>
    </location>
</feature>
<feature type="modified residue" description="Phosphoserine" evidence="43">
    <location>
        <position position="309"/>
    </location>
</feature>
<feature type="modified residue" description="Phosphoserine" evidence="43">
    <location>
        <position position="310"/>
    </location>
</feature>
<feature type="modified residue" description="Phosphoserine" evidence="43">
    <location>
        <position position="319"/>
    </location>
</feature>
<feature type="modified residue" description="Phosphothreonine" evidence="45">
    <location>
        <position position="367"/>
    </location>
</feature>
<feature type="modified residue" description="Phosphoserine" evidence="37 43">
    <location>
        <position position="428"/>
    </location>
</feature>
<feature type="modified residue" description="Phosphoserine" evidence="39 43 45">
    <location>
        <position position="515"/>
    </location>
</feature>
<feature type="modified residue" description="Phosphothreonine" evidence="43">
    <location>
        <position position="517"/>
    </location>
</feature>
<feature type="modified residue" description="Phosphothreonine" evidence="39">
    <location>
        <position position="529"/>
    </location>
</feature>
<feature type="modified residue" description="Phosphoserine" evidence="39 45">
    <location>
        <position position="531"/>
    </location>
</feature>
<feature type="modified residue" description="Phosphothreonine" evidence="44">
    <location>
        <position position="703"/>
    </location>
</feature>
<feature type="modified residue" description="Phosphoserine" evidence="2">
    <location>
        <position position="1209"/>
    </location>
</feature>
<feature type="modified residue" description="Phosphoserine" evidence="44">
    <location>
        <position position="1308"/>
    </location>
</feature>
<feature type="modified residue" description="Phosphoserine" evidence="38">
    <location>
        <position position="1349"/>
    </location>
</feature>
<feature type="modified residue" description="Phosphoserine" evidence="1">
    <location>
        <position position="1370"/>
    </location>
</feature>
<feature type="modified residue" description="Phosphoserine" evidence="37 42 44">
    <location>
        <position position="1531"/>
    </location>
</feature>
<feature type="modified residue" description="Phosphoserine" evidence="39 42 43 44 45">
    <location>
        <position position="1535"/>
    </location>
</feature>
<feature type="modified residue" description="Phosphoserine" evidence="43 44">
    <location>
        <position position="1537"/>
    </location>
</feature>
<feature type="modified residue" description="Phosphothreonine" evidence="2">
    <location>
        <position position="1542"/>
    </location>
</feature>
<feature type="modified residue" description="Phosphothreonine" evidence="2">
    <location>
        <position position="1549"/>
    </location>
</feature>
<feature type="modified residue" description="Phosphothreonine" evidence="41 44">
    <location>
        <position position="1553"/>
    </location>
</feature>
<feature type="modified residue" description="Phosphoserine" evidence="44">
    <location>
        <position position="1570"/>
    </location>
</feature>
<feature type="modified residue" description="Phosphoserine" evidence="44">
    <location>
        <position position="1576"/>
    </location>
</feature>
<feature type="modified residue" description="Phosphoserine" evidence="43 44">
    <location>
        <position position="1602"/>
    </location>
</feature>
<feature type="modified residue" description="N6-acetyllysine; alternate" evidence="40">
    <location>
        <position position="1643"/>
    </location>
</feature>
<feature type="modified residue" description="Phosphothreonine" evidence="42 44 45">
    <location>
        <position position="1653"/>
    </location>
</feature>
<feature type="modified residue" description="Phosphothreonine" evidence="42 44">
    <location>
        <position position="1679"/>
    </location>
</feature>
<feature type="cross-link" description="Glycyl lysine isopeptide (Lys-Gly) (interchain with G-Cter in SUMO2)" evidence="50">
    <location>
        <position position="133"/>
    </location>
</feature>
<feature type="cross-link" description="Glycyl lysine isopeptide (Lys-Gly) (interchain with G-Cter in SUMO2)" evidence="50">
    <location>
        <position position="146"/>
    </location>
</feature>
<feature type="cross-link" description="Glycyl lysine isopeptide (Lys-Gly) (interchain with G-Cter in SUMO2)" evidence="50">
    <location>
        <position position="179"/>
    </location>
</feature>
<feature type="cross-link" description="Glycyl lysine isopeptide (Lys-Gly) (interchain with G-Cter in SUMO2)" evidence="50">
    <location>
        <position position="297"/>
    </location>
</feature>
<feature type="cross-link" description="Glycyl lysine isopeptide (Lys-Gly) (interchain with G-Cter in SUMO2)" evidence="50">
    <location>
        <position position="304"/>
    </location>
</feature>
<feature type="cross-link" description="Glycyl lysine isopeptide (Lys-Gly) (interchain with G-Cter in SUMO2)" evidence="1">
    <location>
        <position position="618"/>
    </location>
</feature>
<feature type="cross-link" description="Glycyl lysine isopeptide (Lys-Gly) (interchain with G-Cter in SUMO2)" evidence="50">
    <location>
        <position position="696"/>
    </location>
</feature>
<feature type="cross-link" description="Glycyl lysine isopeptide (Lys-Gly) (interchain with G-Cter in SUMO1); alternate" evidence="1">
    <location>
        <position position="711"/>
    </location>
</feature>
<feature type="cross-link" description="Glycyl lysine isopeptide (Lys-Gly) (interchain with G-Cter in SUMO2); alternate" evidence="50">
    <location>
        <position position="711"/>
    </location>
</feature>
<feature type="cross-link" description="Glycyl lysine isopeptide (Lys-Gly) (interchain with G-Cter in SUMO2)" evidence="50">
    <location>
        <position position="1212"/>
    </location>
</feature>
<feature type="cross-link" description="Glycyl lysine isopeptide (Lys-Gly) (interchain with G-Cter in SUMO2)" evidence="50">
    <location>
        <position position="1228"/>
    </location>
</feature>
<feature type="cross-link" description="Glycyl lysine isopeptide (Lys-Gly) (interchain with G-Cter in SUMO2)" evidence="50">
    <location>
        <position position="1239"/>
    </location>
</feature>
<feature type="cross-link" description="Glycyl lysine isopeptide (Lys-Gly) (interchain with G-Cter in SUMO2)" evidence="46 47 48 50">
    <location>
        <position position="1304"/>
    </location>
</feature>
<feature type="cross-link" description="Glycyl lysine isopeptide (Lys-Gly) (interchain with G-Cter in SUMO2)" evidence="50">
    <location>
        <position position="1528"/>
    </location>
</feature>
<feature type="cross-link" description="Glycyl lysine isopeptide (Lys-Gly) (interchain with G-Cter in SUMO2)" evidence="50">
    <location>
        <position position="1529"/>
    </location>
</feature>
<feature type="cross-link" description="Glycyl lysine isopeptide (Lys-Gly) (interchain with G-Cter in SUMO2)" evidence="47 50">
    <location>
        <position position="1565"/>
    </location>
</feature>
<feature type="cross-link" description="Glycyl lysine isopeptide (Lys-Gly) (interchain with G-Cter in SUMO2)" evidence="47 48 50">
    <location>
        <position position="1572"/>
    </location>
</feature>
<feature type="cross-link" description="Glycyl lysine isopeptide (Lys-Gly) (interchain with G-Cter in SUMO2)" evidence="50">
    <location>
        <position position="1584"/>
    </location>
</feature>
<feature type="cross-link" description="Glycyl lysine isopeptide (Lys-Gly) (interchain with G-Cter in SUMO2)" evidence="50">
    <location>
        <position position="1606"/>
    </location>
</feature>
<feature type="cross-link" description="Glycyl lysine isopeptide (Lys-Gly) (interchain with G-Cter in SUMO2)" evidence="50">
    <location>
        <position position="1617"/>
    </location>
</feature>
<feature type="cross-link" description="Glycyl lysine isopeptide (Lys-Gly) (interchain with G-Cter in SUMO2)" evidence="50">
    <location>
        <position position="1636"/>
    </location>
</feature>
<feature type="cross-link" description="Glycyl lysine isopeptide (Lys-Gly) (interchain with G-Cter in SUMO2); alternate" evidence="48 50">
    <location>
        <position position="1643"/>
    </location>
</feature>
<feature type="cross-link" description="Glycyl lysine isopeptide (Lys-Gly) (interchain with G-Cter in SUMO2)" evidence="47 48 49 50">
    <location>
        <position position="1647"/>
    </location>
</feature>
<feature type="cross-link" description="Glycyl lysine isopeptide (Lys-Gly) (interchain with G-Cter in SUMO2)" evidence="50">
    <location>
        <position position="1660"/>
    </location>
</feature>
<feature type="cross-link" description="Glycyl lysine isopeptide (Lys-Gly) (interchain with G-Cter in SUMO2)" evidence="47 48 49 50">
    <location>
        <position position="1670"/>
    </location>
</feature>
<feature type="cross-link" description="Glycyl lysine isopeptide (Lys-Gly) (interchain with G-Cter in SUMO2)" evidence="50">
    <location>
        <position position="1687"/>
    </location>
</feature>
<feature type="cross-link" description="Glycyl lysine isopeptide (Lys-Gly) (interchain with G-Cter in SUMO2)" evidence="50">
    <location>
        <position position="1865"/>
    </location>
</feature>
<feature type="splice variant" id="VSP_011416" description="In isoform 2." evidence="30">
    <original>R</original>
    <variation>RGVCGRPRPPPMGRSTRAVGPAHLPSLPP</variation>
    <location>
        <position position="1353"/>
    </location>
</feature>
<feature type="sequence variant" id="VAR_031674" description="In dbSNP:rs1639122." evidence="28">
    <original>E</original>
    <variation>D</variation>
    <location>
        <position position="139"/>
    </location>
</feature>
<feature type="sequence variant" id="VAR_077146" description="In SIHIWES; dbSNP:rs886039916." evidence="19">
    <original>S</original>
    <variation>Y</variation>
    <location>
        <position position="851"/>
    </location>
</feature>
<feature type="sequence variant" id="VAR_077147" description="In SIHIWES." evidence="20">
    <original>G</original>
    <variation>D</variation>
    <location>
        <position position="1003"/>
    </location>
</feature>
<feature type="sequence variant" id="VAR_077148" description="In SIHIWES; dbSNP:rs886039915." evidence="19">
    <original>R</original>
    <variation>H</variation>
    <location>
        <position position="1068"/>
    </location>
</feature>
<feature type="sequence variant" id="VAR_077149" description="In SIHIWES; no effect on interaction with HDAC1; no effect on nuclear localization; dbSNP:rs886039917." evidence="20">
    <original>R</original>
    <variation>Q</variation>
    <location>
        <position position="1127"/>
    </location>
</feature>
<feature type="sequence variant" id="VAR_077150" description="In SIHIWES; dbSNP:rs886039919." evidence="20">
    <original>W</original>
    <variation>L</variation>
    <location>
        <position position="1148"/>
    </location>
</feature>
<feature type="sequence variant" id="VAR_077151" description="In SIHIWES; no effect on interaction with HDAC1; no effect on nuclear localization; dbSNP:rs886039918." evidence="20">
    <original>R</original>
    <variation>L</variation>
    <location>
        <position position="1173"/>
    </location>
</feature>
<feature type="sequence variant" id="VAR_077152" description="In SIHIWES; uncertain significance; dbSNP:rs201992075." evidence="19">
    <original>V</original>
    <variation>I</variation>
    <location>
        <position position="1608"/>
    </location>
</feature>
<feature type="sequence variant" id="VAR_031675" description="In dbSNP:rs35512811.">
    <original>S</original>
    <variation>L</variation>
    <location>
        <position position="1648"/>
    </location>
</feature>
<feature type="sequence variant" id="VAR_031676" description="In dbSNP:rs16932768.">
    <original>I</original>
    <variation>V</variation>
    <location>
        <position position="1655"/>
    </location>
</feature>
<feature type="sequence conflict" description="In Ref. 3; AAH38596." evidence="31" ref="3">
    <location>
        <begin position="34"/>
        <end position="36"/>
    </location>
</feature>
<feature type="strand" evidence="54">
    <location>
        <begin position="145"/>
        <end position="147"/>
    </location>
</feature>
<feature type="helix" evidence="54">
    <location>
        <begin position="151"/>
        <end position="157"/>
    </location>
</feature>
<feature type="helix" evidence="54">
    <location>
        <begin position="169"/>
        <end position="174"/>
    </location>
</feature>
<feature type="helix" evidence="54">
    <location>
        <begin position="178"/>
        <end position="190"/>
    </location>
</feature>
<feature type="helix" evidence="54">
    <location>
        <begin position="198"/>
        <end position="215"/>
    </location>
</feature>
<feature type="strand" evidence="56">
    <location>
        <begin position="294"/>
        <end position="299"/>
    </location>
</feature>
<feature type="turn" evidence="52">
    <location>
        <begin position="374"/>
        <end position="376"/>
    </location>
</feature>
<feature type="strand" evidence="52">
    <location>
        <begin position="386"/>
        <end position="389"/>
    </location>
</feature>
<feature type="helix" evidence="52">
    <location>
        <begin position="394"/>
        <end position="397"/>
    </location>
</feature>
<feature type="helix" evidence="52">
    <location>
        <begin position="414"/>
        <end position="417"/>
    </location>
</feature>
<feature type="strand" evidence="51">
    <location>
        <begin position="450"/>
        <end position="452"/>
    </location>
</feature>
<feature type="turn" evidence="57">
    <location>
        <begin position="453"/>
        <end position="455"/>
    </location>
</feature>
<feature type="strand" evidence="53">
    <location>
        <begin position="459"/>
        <end position="463"/>
    </location>
</feature>
<feature type="strand" evidence="57">
    <location>
        <begin position="465"/>
        <end position="468"/>
    </location>
</feature>
<feature type="helix" evidence="57">
    <location>
        <begin position="473"/>
        <end position="475"/>
    </location>
</feature>
<feature type="strand" evidence="57">
    <location>
        <begin position="476"/>
        <end position="478"/>
    </location>
</feature>
<feature type="turn" evidence="57">
    <location>
        <begin position="491"/>
        <end position="494"/>
    </location>
</feature>
<feature type="strand" evidence="57">
    <location>
        <begin position="502"/>
        <end position="510"/>
    </location>
</feature>
<feature type="strand" evidence="57">
    <location>
        <begin position="541"/>
        <end position="547"/>
    </location>
</feature>
<feature type="helix" evidence="57">
    <location>
        <begin position="552"/>
        <end position="554"/>
    </location>
</feature>
<feature type="strand" evidence="57">
    <location>
        <begin position="556"/>
        <end position="559"/>
    </location>
</feature>
<feature type="helix" evidence="57">
    <location>
        <begin position="560"/>
        <end position="566"/>
    </location>
</feature>
<feature type="helix" evidence="57">
    <location>
        <begin position="568"/>
        <end position="576"/>
    </location>
</feature>
<feature type="strand" evidence="57">
    <location>
        <begin position="580"/>
        <end position="582"/>
    </location>
</feature>
<feature type="helix" evidence="55">
    <location>
        <begin position="594"/>
        <end position="599"/>
    </location>
</feature>
<feature type="helix" evidence="57">
    <location>
        <begin position="603"/>
        <end position="611"/>
    </location>
</feature>
<feature type="helix" evidence="57">
    <location>
        <begin position="613"/>
        <end position="615"/>
    </location>
</feature>
<feature type="helix" evidence="57">
    <location>
        <begin position="619"/>
        <end position="622"/>
    </location>
</feature>
<feature type="strand" evidence="57">
    <location>
        <begin position="623"/>
        <end position="632"/>
    </location>
</feature>
<feature type="strand" evidence="57">
    <location>
        <begin position="638"/>
        <end position="644"/>
    </location>
</feature>
<feature type="helix" evidence="57">
    <location>
        <begin position="649"/>
        <end position="651"/>
    </location>
</feature>
<feature type="strand" evidence="57">
    <location>
        <begin position="653"/>
        <end position="656"/>
    </location>
</feature>
<feature type="helix" evidence="57">
    <location>
        <begin position="664"/>
        <end position="675"/>
    </location>
</feature>
<feature type="strand" evidence="58">
    <location>
        <begin position="708"/>
        <end position="710"/>
    </location>
</feature>
<feature type="helix" evidence="58">
    <location>
        <begin position="717"/>
        <end position="720"/>
    </location>
</feature>
<feature type="turn" evidence="58">
    <location>
        <begin position="721"/>
        <end position="723"/>
    </location>
</feature>
<feature type="helix" evidence="58">
    <location>
        <begin position="728"/>
        <end position="742"/>
    </location>
</feature>
<feature type="helix" evidence="58">
    <location>
        <begin position="757"/>
        <end position="771"/>
    </location>
</feature>
<feature type="strand" evidence="58">
    <location>
        <begin position="778"/>
        <end position="782"/>
    </location>
</feature>
<feature type="helix" evidence="58">
    <location>
        <begin position="784"/>
        <end position="786"/>
    </location>
</feature>
<feature type="helix" evidence="58">
    <location>
        <begin position="787"/>
        <end position="790"/>
    </location>
</feature>
<feature type="turn" evidence="58">
    <location>
        <begin position="791"/>
        <end position="795"/>
    </location>
</feature>
<feature type="strand" evidence="58">
    <location>
        <begin position="803"/>
        <end position="806"/>
    </location>
</feature>
<feature type="helix" evidence="58">
    <location>
        <begin position="810"/>
        <end position="820"/>
    </location>
</feature>
<feature type="strand" evidence="58">
    <location>
        <begin position="823"/>
        <end position="825"/>
    </location>
</feature>
<feature type="strand" evidence="58">
    <location>
        <begin position="831"/>
        <end position="833"/>
    </location>
</feature>
<feature type="strand" evidence="58">
    <location>
        <begin position="846"/>
        <end position="851"/>
    </location>
</feature>
<feature type="helix" evidence="58">
    <location>
        <begin position="852"/>
        <end position="857"/>
    </location>
</feature>
<feature type="turn" evidence="58">
    <location>
        <begin position="858"/>
        <end position="862"/>
    </location>
</feature>
<feature type="helix" evidence="58">
    <location>
        <begin position="863"/>
        <end position="865"/>
    </location>
</feature>
<feature type="strand" evidence="58">
    <location>
        <begin position="868"/>
        <end position="874"/>
    </location>
</feature>
<feature type="helix" evidence="58">
    <location>
        <begin position="875"/>
        <end position="877"/>
    </location>
</feature>
<feature type="helix" evidence="58">
    <location>
        <begin position="884"/>
        <end position="891"/>
    </location>
</feature>
<feature type="strand" evidence="58">
    <location>
        <begin position="897"/>
        <end position="900"/>
    </location>
</feature>
<feature type="strand" evidence="58">
    <location>
        <begin position="907"/>
        <end position="909"/>
    </location>
</feature>
<feature type="helix" evidence="58">
    <location>
        <begin position="910"/>
        <end position="919"/>
    </location>
</feature>
<feature type="turn" evidence="58">
    <location>
        <begin position="921"/>
        <end position="923"/>
    </location>
</feature>
<feature type="helix" evidence="58">
    <location>
        <begin position="928"/>
        <end position="930"/>
    </location>
</feature>
<feature type="helix" evidence="58">
    <location>
        <begin position="939"/>
        <end position="949"/>
    </location>
</feature>
<feature type="strand" evidence="58">
    <location>
        <begin position="951"/>
        <end position="954"/>
    </location>
</feature>
<feature type="turn" evidence="58">
    <location>
        <begin position="960"/>
        <end position="962"/>
    </location>
</feature>
<feature type="strand" evidence="58">
    <location>
        <begin position="969"/>
        <end position="976"/>
    </location>
</feature>
<feature type="helix" evidence="58">
    <location>
        <begin position="980"/>
        <end position="990"/>
    </location>
</feature>
<feature type="helix" evidence="58">
    <location>
        <begin position="994"/>
        <end position="997"/>
    </location>
</feature>
<feature type="strand" evidence="58">
    <location>
        <begin position="1000"/>
        <end position="1002"/>
    </location>
</feature>
<feature type="turn" evidence="58">
    <location>
        <begin position="1003"/>
        <end position="1006"/>
    </location>
</feature>
<feature type="helix" evidence="58">
    <location>
        <begin position="1011"/>
        <end position="1020"/>
    </location>
</feature>
<feature type="helix" evidence="58">
    <location>
        <begin position="1022"/>
        <end position="1024"/>
    </location>
</feature>
<feature type="helix" evidence="58">
    <location>
        <begin position="1026"/>
        <end position="1030"/>
    </location>
</feature>
<feature type="turn" evidence="58">
    <location>
        <begin position="1036"/>
        <end position="1038"/>
    </location>
</feature>
<feature type="helix" evidence="58">
    <location>
        <begin position="1042"/>
        <end position="1047"/>
    </location>
</feature>
<feature type="helix" evidence="58">
    <location>
        <begin position="1050"/>
        <end position="1065"/>
    </location>
</feature>
<feature type="strand" evidence="58">
    <location>
        <begin position="1069"/>
        <end position="1072"/>
    </location>
</feature>
<feature type="helix" evidence="58">
    <location>
        <begin position="1078"/>
        <end position="1089"/>
    </location>
</feature>
<feature type="strand" evidence="58">
    <location>
        <begin position="1093"/>
        <end position="1095"/>
    </location>
</feature>
<feature type="strand" evidence="58">
    <location>
        <begin position="1098"/>
        <end position="1100"/>
    </location>
</feature>
<feature type="helix" evidence="58">
    <location>
        <begin position="1102"/>
        <end position="1112"/>
    </location>
</feature>
<feature type="strand" evidence="58">
    <location>
        <begin position="1114"/>
        <end position="1116"/>
    </location>
</feature>
<feature type="strand" evidence="58">
    <location>
        <begin position="1121"/>
        <end position="1124"/>
    </location>
</feature>
<feature type="strand" evidence="58">
    <location>
        <begin position="1126"/>
        <end position="1132"/>
    </location>
</feature>
<feature type="strand" evidence="58">
    <location>
        <begin position="1140"/>
        <end position="1143"/>
    </location>
</feature>
<feature type="strand" evidence="58">
    <location>
        <begin position="1148"/>
        <end position="1150"/>
    </location>
</feature>
<feature type="helix" evidence="58">
    <location>
        <begin position="1151"/>
        <end position="1157"/>
    </location>
</feature>
<feature type="turn" evidence="58">
    <location>
        <begin position="1158"/>
        <end position="1160"/>
    </location>
</feature>
<feature type="strand" evidence="58">
    <location>
        <begin position="1169"/>
        <end position="1179"/>
    </location>
</feature>
<feature type="helix" evidence="58">
    <location>
        <begin position="1180"/>
        <end position="1191"/>
    </location>
</feature>
<feature type="turn" evidence="58">
    <location>
        <begin position="1192"/>
        <end position="1194"/>
    </location>
</feature>
<feature type="turn" evidence="58">
    <location>
        <begin position="1197"/>
        <end position="1199"/>
    </location>
</feature>
<feature type="strand" evidence="59">
    <location>
        <begin position="1403"/>
        <end position="1407"/>
    </location>
</feature>
<feature type="strand" evidence="59">
    <location>
        <begin position="1410"/>
        <end position="1413"/>
    </location>
</feature>
<feature type="helix" evidence="59">
    <location>
        <begin position="1418"/>
        <end position="1431"/>
    </location>
</feature>
<feature type="strand" evidence="59">
    <location>
        <begin position="1435"/>
        <end position="1437"/>
    </location>
</feature>
<feature type="helix" evidence="59">
    <location>
        <begin position="1447"/>
        <end position="1450"/>
    </location>
</feature>
<feature type="helix" evidence="59">
    <location>
        <begin position="1453"/>
        <end position="1467"/>
    </location>
</feature>
<feature type="helix" evidence="59">
    <location>
        <begin position="1489"/>
        <end position="1513"/>
    </location>
</feature>
<feature type="helix" evidence="59">
    <location>
        <begin position="1708"/>
        <end position="1721"/>
    </location>
</feature>
<feature type="turn" evidence="59">
    <location>
        <begin position="1725"/>
        <end position="1727"/>
    </location>
</feature>
<feature type="helix" evidence="59">
    <location>
        <begin position="1731"/>
        <end position="1743"/>
    </location>
</feature>
<feature type="helix" evidence="59">
    <location>
        <begin position="1749"/>
        <end position="1754"/>
    </location>
</feature>
<feature type="helix" evidence="59">
    <location>
        <begin position="1756"/>
        <end position="1765"/>
    </location>
</feature>
<feature type="turn" evidence="59">
    <location>
        <begin position="1767"/>
        <end position="1770"/>
    </location>
</feature>
<feature type="helix" evidence="59">
    <location>
        <begin position="1774"/>
        <end position="1802"/>
    </location>
</feature>
<feature type="turn" evidence="59">
    <location>
        <begin position="1803"/>
        <end position="1806"/>
    </location>
</feature>
<proteinExistence type="evidence at protein level"/>
<accession>Q14839</accession>
<accession>Q8IXZ5</accession>
<gene>
    <name type="primary">CHD4</name>
</gene>
<reference key="1">
    <citation type="journal article" date="1995" name="Arthritis Rheum.">
        <title>The major dermatomyositis specific Mi-2 autoantigen is a presumed helicase involved in transcriptional activation.</title>
        <authorList>
            <person name="Seelig H.P."/>
            <person name="Moosbrugger I."/>
            <person name="Ehrfeld H."/>
            <person name="Fink T."/>
            <person name="Renz M."/>
            <person name="Genth E."/>
        </authorList>
    </citation>
    <scope>NUCLEOTIDE SEQUENCE [MRNA] (ISOFORM 1)</scope>
    <scope>VARIANT ASP-139</scope>
</reference>
<reference key="2">
    <citation type="journal article" date="2006" name="Nature">
        <title>The finished DNA sequence of human chromosome 12.</title>
        <authorList>
            <person name="Scherer S.E."/>
            <person name="Muzny D.M."/>
            <person name="Buhay C.J."/>
            <person name="Chen R."/>
            <person name="Cree A."/>
            <person name="Ding Y."/>
            <person name="Dugan-Rocha S."/>
            <person name="Gill R."/>
            <person name="Gunaratne P."/>
            <person name="Harris R.A."/>
            <person name="Hawes A.C."/>
            <person name="Hernandez J."/>
            <person name="Hodgson A.V."/>
            <person name="Hume J."/>
            <person name="Jackson A."/>
            <person name="Khan Z.M."/>
            <person name="Kovar-Smith C."/>
            <person name="Lewis L.R."/>
            <person name="Lozado R.J."/>
            <person name="Metzker M.L."/>
            <person name="Milosavljevic A."/>
            <person name="Miner G.R."/>
            <person name="Montgomery K.T."/>
            <person name="Morgan M.B."/>
            <person name="Nazareth L.V."/>
            <person name="Scott G."/>
            <person name="Sodergren E."/>
            <person name="Song X.-Z."/>
            <person name="Steffen D."/>
            <person name="Lovering R.C."/>
            <person name="Wheeler D.A."/>
            <person name="Worley K.C."/>
            <person name="Yuan Y."/>
            <person name="Zhang Z."/>
            <person name="Adams C.Q."/>
            <person name="Ansari-Lari M.A."/>
            <person name="Ayele M."/>
            <person name="Brown M.J."/>
            <person name="Chen G."/>
            <person name="Chen Z."/>
            <person name="Clerc-Blankenburg K.P."/>
            <person name="Davis C."/>
            <person name="Delgado O."/>
            <person name="Dinh H.H."/>
            <person name="Draper H."/>
            <person name="Gonzalez-Garay M.L."/>
            <person name="Havlak P."/>
            <person name="Jackson L.R."/>
            <person name="Jacob L.S."/>
            <person name="Kelly S.H."/>
            <person name="Li L."/>
            <person name="Li Z."/>
            <person name="Liu J."/>
            <person name="Liu W."/>
            <person name="Lu J."/>
            <person name="Maheshwari M."/>
            <person name="Nguyen B.-V."/>
            <person name="Okwuonu G.O."/>
            <person name="Pasternak S."/>
            <person name="Perez L.M."/>
            <person name="Plopper F.J.H."/>
            <person name="Santibanez J."/>
            <person name="Shen H."/>
            <person name="Tabor P.E."/>
            <person name="Verduzco D."/>
            <person name="Waldron L."/>
            <person name="Wang Q."/>
            <person name="Williams G.A."/>
            <person name="Zhang J."/>
            <person name="Zhou J."/>
            <person name="Allen C.C."/>
            <person name="Amin A.G."/>
            <person name="Anyalebechi V."/>
            <person name="Bailey M."/>
            <person name="Barbaria J.A."/>
            <person name="Bimage K.E."/>
            <person name="Bryant N.P."/>
            <person name="Burch P.E."/>
            <person name="Burkett C.E."/>
            <person name="Burrell K.L."/>
            <person name="Calderon E."/>
            <person name="Cardenas V."/>
            <person name="Carter K."/>
            <person name="Casias K."/>
            <person name="Cavazos I."/>
            <person name="Cavazos S.R."/>
            <person name="Ceasar H."/>
            <person name="Chacko J."/>
            <person name="Chan S.N."/>
            <person name="Chavez D."/>
            <person name="Christopoulos C."/>
            <person name="Chu J."/>
            <person name="Cockrell R."/>
            <person name="Cox C.D."/>
            <person name="Dang M."/>
            <person name="Dathorne S.R."/>
            <person name="David R."/>
            <person name="Davis C.M."/>
            <person name="Davy-Carroll L."/>
            <person name="Deshazo D.R."/>
            <person name="Donlin J.E."/>
            <person name="D'Souza L."/>
            <person name="Eaves K.A."/>
            <person name="Egan A."/>
            <person name="Emery-Cohen A.J."/>
            <person name="Escotto M."/>
            <person name="Flagg N."/>
            <person name="Forbes L.D."/>
            <person name="Gabisi A.M."/>
            <person name="Garza M."/>
            <person name="Hamilton C."/>
            <person name="Henderson N."/>
            <person name="Hernandez O."/>
            <person name="Hines S."/>
            <person name="Hogues M.E."/>
            <person name="Huang M."/>
            <person name="Idlebird D.G."/>
            <person name="Johnson R."/>
            <person name="Jolivet A."/>
            <person name="Jones S."/>
            <person name="Kagan R."/>
            <person name="King L.M."/>
            <person name="Leal B."/>
            <person name="Lebow H."/>
            <person name="Lee S."/>
            <person name="LeVan J.M."/>
            <person name="Lewis L.C."/>
            <person name="London P."/>
            <person name="Lorensuhewa L.M."/>
            <person name="Loulseged H."/>
            <person name="Lovett D.A."/>
            <person name="Lucier A."/>
            <person name="Lucier R.L."/>
            <person name="Ma J."/>
            <person name="Madu R.C."/>
            <person name="Mapua P."/>
            <person name="Martindale A.D."/>
            <person name="Martinez E."/>
            <person name="Massey E."/>
            <person name="Mawhiney S."/>
            <person name="Meador M.G."/>
            <person name="Mendez S."/>
            <person name="Mercado C."/>
            <person name="Mercado I.C."/>
            <person name="Merritt C.E."/>
            <person name="Miner Z.L."/>
            <person name="Minja E."/>
            <person name="Mitchell T."/>
            <person name="Mohabbat F."/>
            <person name="Mohabbat K."/>
            <person name="Montgomery B."/>
            <person name="Moore N."/>
            <person name="Morris S."/>
            <person name="Munidasa M."/>
            <person name="Ngo R.N."/>
            <person name="Nguyen N.B."/>
            <person name="Nickerson E."/>
            <person name="Nwaokelemeh O.O."/>
            <person name="Nwokenkwo S."/>
            <person name="Obregon M."/>
            <person name="Oguh M."/>
            <person name="Oragunye N."/>
            <person name="Oviedo R.J."/>
            <person name="Parish B.J."/>
            <person name="Parker D.N."/>
            <person name="Parrish J."/>
            <person name="Parks K.L."/>
            <person name="Paul H.A."/>
            <person name="Payton B.A."/>
            <person name="Perez A."/>
            <person name="Perrin W."/>
            <person name="Pickens A."/>
            <person name="Primus E.L."/>
            <person name="Pu L.-L."/>
            <person name="Puazo M."/>
            <person name="Quiles M.M."/>
            <person name="Quiroz J.B."/>
            <person name="Rabata D."/>
            <person name="Reeves K."/>
            <person name="Ruiz S.J."/>
            <person name="Shao H."/>
            <person name="Sisson I."/>
            <person name="Sonaike T."/>
            <person name="Sorelle R.P."/>
            <person name="Sutton A.E."/>
            <person name="Svatek A.F."/>
            <person name="Svetz L.A."/>
            <person name="Tamerisa K.S."/>
            <person name="Taylor T.R."/>
            <person name="Teague B."/>
            <person name="Thomas N."/>
            <person name="Thorn R.D."/>
            <person name="Trejos Z.Y."/>
            <person name="Trevino B.K."/>
            <person name="Ukegbu O.N."/>
            <person name="Urban J.B."/>
            <person name="Vasquez L.I."/>
            <person name="Vera V.A."/>
            <person name="Villasana D.M."/>
            <person name="Wang L."/>
            <person name="Ward-Moore S."/>
            <person name="Warren J.T."/>
            <person name="Wei X."/>
            <person name="White F."/>
            <person name="Williamson A.L."/>
            <person name="Wleczyk R."/>
            <person name="Wooden H.S."/>
            <person name="Wooden S.H."/>
            <person name="Yen J."/>
            <person name="Yoon L."/>
            <person name="Yoon V."/>
            <person name="Zorrilla S.E."/>
            <person name="Nelson D."/>
            <person name="Kucherlapati R."/>
            <person name="Weinstock G."/>
            <person name="Gibbs R.A."/>
        </authorList>
    </citation>
    <scope>NUCLEOTIDE SEQUENCE [LARGE SCALE GENOMIC DNA]</scope>
</reference>
<reference key="3">
    <citation type="journal article" date="2004" name="Genome Res.">
        <title>The status, quality, and expansion of the NIH full-length cDNA project: the Mammalian Gene Collection (MGC).</title>
        <authorList>
            <consortium name="The MGC Project Team"/>
        </authorList>
    </citation>
    <scope>NUCLEOTIDE SEQUENCE [LARGE SCALE MRNA] (ISOFORM 2)</scope>
    <source>
        <tissue>Skin</tissue>
    </source>
</reference>
<reference key="4">
    <citation type="journal article" date="1998" name="Nature">
        <title>Chromatin deacetylation by an ATP-dependent nucleosome remodelling complex.</title>
        <authorList>
            <person name="Tong J.K."/>
            <person name="Hassig C.A."/>
            <person name="Schnitzler G.R."/>
            <person name="Kingston R.E."/>
            <person name="Schreiber S.L."/>
        </authorList>
    </citation>
    <scope>IDENTIFICATION AS A COMPONENT OF THE NURD COMPLEX</scope>
    <scope>FUNCTION</scope>
</reference>
<reference key="5">
    <citation type="journal article" date="1999" name="Biochemistry">
        <title>Molecular association between ATR and two components of the nucleosome remodeling and deacetylating complex, HDAC2 and CHD4.</title>
        <authorList>
            <person name="Schmidt D.R."/>
            <person name="Schreiber S.L."/>
        </authorList>
    </citation>
    <scope>IDENTIFICATION IN A COMPLEX CONTAINING ATR AND HDAC2</scope>
    <scope>IDENTIFICATION BY MASS SPECTROMETRY</scope>
</reference>
<reference key="6">
    <citation type="journal article" date="1999" name="Immunity">
        <title>Ikaros DNA-binding proteins direct formation of chromatin remodeling complexes in lymphocytes.</title>
        <authorList>
            <person name="Kim J."/>
            <person name="Sif S."/>
            <person name="Jones B."/>
            <person name="Jackson A."/>
            <person name="Koipally J."/>
            <person name="Heller E."/>
            <person name="Winandy S."/>
            <person name="Viel A."/>
            <person name="Sawyer A."/>
            <person name="Ikeda T."/>
            <person name="Kingston R."/>
            <person name="Georgopoulos K."/>
        </authorList>
    </citation>
    <scope>INTERACTION WITH IKZF1 IN THE NURD COMPLEX</scope>
</reference>
<reference key="7">
    <citation type="journal article" date="2002" name="Nature">
        <title>A chromatin remodelling complex that loads cohesin onto human chromosomes.</title>
        <authorList>
            <person name="Hakimi M.-A."/>
            <person name="Bochar D.A."/>
            <person name="Schmiesing J.A."/>
            <person name="Dong Y."/>
            <person name="Barak O.G."/>
            <person name="Speicher D.W."/>
            <person name="Yokomori K."/>
            <person name="Shiekhattar R."/>
        </authorList>
    </citation>
    <scope>INTERACTION WITH HDAC2; SMARCA5 AND RAD21</scope>
</reference>
<reference key="8">
    <citation type="journal article" date="2003" name="J. Biol. Chem.">
        <title>Mi-2 beta associates with BRG1 and RET finger protein at the distinct regions with transcriptional activating and repressing abilities.</title>
        <authorList>
            <person name="Shimono Y."/>
            <person name="Murakami H."/>
            <person name="Kawai K."/>
            <person name="Wade P.A."/>
            <person name="Shimokata K."/>
            <person name="Takahashi M."/>
        </authorList>
    </citation>
    <scope>INTERACTION WITH TRIM27</scope>
</reference>
<reference key="9">
    <citation type="journal article" date="2004" name="Cell">
        <title>MTA3 and the Mi-2/NuRD complex regulate cell fate during B lymphocyte differentiation.</title>
        <authorList>
            <person name="Fujita N."/>
            <person name="Jaye D.L."/>
            <person name="Geigerman C."/>
            <person name="Akyildiz A."/>
            <person name="Mooney M.R."/>
            <person name="Boss J.M."/>
            <person name="Wade P.A."/>
        </authorList>
    </citation>
    <scope>INTERACTION WITH BCL6</scope>
    <scope>IDENTIFICATION IN THE NURD COMPLEX</scope>
</reference>
<reference key="10">
    <citation type="journal article" date="2006" name="Cell">
        <title>Global, in vivo, and site-specific phosphorylation dynamics in signaling networks.</title>
        <authorList>
            <person name="Olsen J.V."/>
            <person name="Blagoev B."/>
            <person name="Gnad F."/>
            <person name="Macek B."/>
            <person name="Kumar C."/>
            <person name="Mortensen P."/>
            <person name="Mann M."/>
        </authorList>
    </citation>
    <scope>PHOSPHORYLATION [LARGE SCALE ANALYSIS] AT SER-428 AND SER-1531</scope>
    <scope>IDENTIFICATION BY MASS SPECTROMETRY [LARGE SCALE ANALYSIS]</scope>
    <source>
        <tissue>Cervix carcinoma</tissue>
    </source>
</reference>
<reference key="11">
    <citation type="journal article" date="2007" name="Mol. Biol. Cell">
        <title>Chromatin remodeling proteins interact with pericentrin to regulate centrosome integrity.</title>
        <authorList>
            <person name="Sillibourne J.E."/>
            <person name="Delaval B."/>
            <person name="Redick S."/>
            <person name="Sinha M."/>
            <person name="Doxsey S.J."/>
        </authorList>
    </citation>
    <scope>INTERACTION WITH PCNT</scope>
    <scope>SUBCELLULAR LOCATION</scope>
    <scope>FUNCTION</scope>
</reference>
<reference key="12">
    <citation type="journal article" date="2006" name="Mol. Cell. Biol.">
        <title>MBD2/NuRD and MBD3/NuRD, two distinct complexes with different biochemical and functional properties.</title>
        <authorList>
            <person name="Le Guezennec X."/>
            <person name="Vermeulen M."/>
            <person name="Brinkman A.B."/>
            <person name="Hoeijmakers W.A."/>
            <person name="Cohen A."/>
            <person name="Lasonder E."/>
            <person name="Stunnenberg H.G."/>
        </authorList>
    </citation>
    <scope>FUNCTION</scope>
    <scope>IDENTIFICATION IN THE NURD COMPLEX</scope>
    <scope>IDENTIFICATION BY MASS SPECTROMETRY</scope>
</reference>
<reference key="13">
    <citation type="journal article" date="2007" name="Science">
        <title>ATM and ATR substrate analysis reveals extensive protein networks responsive to DNA damage.</title>
        <authorList>
            <person name="Matsuoka S."/>
            <person name="Ballif B.A."/>
            <person name="Smogorzewska A."/>
            <person name="McDonald E.R. III"/>
            <person name="Hurov K.E."/>
            <person name="Luo J."/>
            <person name="Bakalarski C.E."/>
            <person name="Zhao Z."/>
            <person name="Solimini N."/>
            <person name="Lerenthal Y."/>
            <person name="Shiloh Y."/>
            <person name="Gygi S.P."/>
            <person name="Elledge S.J."/>
        </authorList>
    </citation>
    <scope>PHOSPHORYLATION [LARGE SCALE ANALYSIS] AT SER-1349</scope>
    <scope>IDENTIFICATION BY MASS SPECTROMETRY [LARGE SCALE ANALYSIS]</scope>
    <source>
        <tissue>Embryonic kidney</tissue>
    </source>
</reference>
<reference key="14">
    <citation type="journal article" date="2008" name="Proc. Natl. Acad. Sci. U.S.A.">
        <title>A quantitative atlas of mitotic phosphorylation.</title>
        <authorList>
            <person name="Dephoure N."/>
            <person name="Zhou C."/>
            <person name="Villen J."/>
            <person name="Beausoleil S.A."/>
            <person name="Bakalarski C.E."/>
            <person name="Elledge S.J."/>
            <person name="Gygi S.P."/>
        </authorList>
    </citation>
    <scope>PHOSPHORYLATION [LARGE SCALE ANALYSIS] AT SER-515; THR-529; SER-531 AND SER-1535</scope>
    <scope>IDENTIFICATION BY MASS SPECTROMETRY [LARGE SCALE ANALYSIS]</scope>
    <source>
        <tissue>Cervix carcinoma</tissue>
    </source>
</reference>
<reference key="15">
    <citation type="journal article" date="2009" name="Anal. Chem.">
        <title>Lys-N and trypsin cover complementary parts of the phosphoproteome in a refined SCX-based approach.</title>
        <authorList>
            <person name="Gauci S."/>
            <person name="Helbig A.O."/>
            <person name="Slijper M."/>
            <person name="Krijgsveld J."/>
            <person name="Heck A.J."/>
            <person name="Mohammed S."/>
        </authorList>
    </citation>
    <scope>IDENTIFICATION BY MASS SPECTROMETRY [LARGE SCALE ANALYSIS]</scope>
</reference>
<reference key="16">
    <citation type="journal article" date="2009" name="EMBO J.">
        <title>ZIP: a novel transcription repressor, represses EGFR oncogene and suppresses breast carcinogenesis.</title>
        <authorList>
            <person name="Li R."/>
            <person name="Zhang H."/>
            <person name="Yu W."/>
            <person name="Chen Y."/>
            <person name="Gui B."/>
            <person name="Liang J."/>
            <person name="Wang Y."/>
            <person name="Sun L."/>
            <person name="Yang X."/>
            <person name="Zhang Y."/>
            <person name="Shi L."/>
            <person name="Li Y."/>
            <person name="Shang Y."/>
        </authorList>
    </citation>
    <scope>INTERACTION WITH ZGPAT</scope>
</reference>
<reference key="17">
    <citation type="journal article" date="2009" name="Sci. Signal.">
        <title>Quantitative phosphoproteomic analysis of T cell receptor signaling reveals system-wide modulation of protein-protein interactions.</title>
        <authorList>
            <person name="Mayya V."/>
            <person name="Lundgren D.H."/>
            <person name="Hwang S.-I."/>
            <person name="Rezaul K."/>
            <person name="Wu L."/>
            <person name="Eng J.K."/>
            <person name="Rodionov V."/>
            <person name="Han D.K."/>
        </authorList>
    </citation>
    <scope>PHOSPHORYLATION [LARGE SCALE ANALYSIS] AT THR-1553</scope>
    <scope>IDENTIFICATION BY MASS SPECTROMETRY [LARGE SCALE ANALYSIS]</scope>
    <source>
        <tissue>Leukemic T-cell</tissue>
    </source>
</reference>
<reference key="18">
    <citation type="journal article" date="2009" name="Science">
        <title>Lysine acetylation targets protein complexes and co-regulates major cellular functions.</title>
        <authorList>
            <person name="Choudhary C."/>
            <person name="Kumar C."/>
            <person name="Gnad F."/>
            <person name="Nielsen M.L."/>
            <person name="Rehman M."/>
            <person name="Walther T.C."/>
            <person name="Olsen J.V."/>
            <person name="Mann M."/>
        </authorList>
    </citation>
    <scope>ACETYLATION [LARGE SCALE ANALYSIS] AT LYS-1643</scope>
    <scope>IDENTIFICATION BY MASS SPECTROMETRY [LARGE SCALE ANALYSIS]</scope>
</reference>
<reference key="19">
    <citation type="journal article" date="2010" name="Sci. Signal.">
        <title>Quantitative phosphoproteomics reveals widespread full phosphorylation site occupancy during mitosis.</title>
        <authorList>
            <person name="Olsen J.V."/>
            <person name="Vermeulen M."/>
            <person name="Santamaria A."/>
            <person name="Kumar C."/>
            <person name="Miller M.L."/>
            <person name="Jensen L.J."/>
            <person name="Gnad F."/>
            <person name="Cox J."/>
            <person name="Jensen T.S."/>
            <person name="Nigg E.A."/>
            <person name="Brunak S."/>
            <person name="Mann M."/>
        </authorList>
    </citation>
    <scope>PHOSPHORYLATION [LARGE SCALE ANALYSIS] AT SER-44; SER-1531; SER-1535; THR-1653 AND THR-1679</scope>
    <scope>IDENTIFICATION BY MASS SPECTROMETRY [LARGE SCALE ANALYSIS]</scope>
    <source>
        <tissue>Cervix carcinoma</tissue>
    </source>
</reference>
<reference key="20">
    <citation type="journal article" date="2011" name="BMC Syst. Biol.">
        <title>Initial characterization of the human central proteome.</title>
        <authorList>
            <person name="Burkard T.R."/>
            <person name="Planyavsky M."/>
            <person name="Kaupe I."/>
            <person name="Breitwieser F.P."/>
            <person name="Buerckstuemmer T."/>
            <person name="Bennett K.L."/>
            <person name="Superti-Furga G."/>
            <person name="Colinge J."/>
        </authorList>
    </citation>
    <scope>IDENTIFICATION BY MASS SPECTROMETRY [LARGE SCALE ANALYSIS]</scope>
</reference>
<reference key="21">
    <citation type="journal article" date="2011" name="Mol. Cell. Biol.">
        <title>The Brd4 extraterminal domain confers transcription activation independent of pTEFb by recruiting multiple proteins, including NSD3.</title>
        <authorList>
            <person name="Rahman S."/>
            <person name="Sowa M.E."/>
            <person name="Ottinger M."/>
            <person name="Smith J.A."/>
            <person name="Shi Y."/>
            <person name="Harper J.W."/>
            <person name="Howley P.M."/>
        </authorList>
    </citation>
    <scope>INTERACTION WITH BRD4</scope>
</reference>
<reference key="22">
    <citation type="journal article" date="2011" name="Sci. Signal.">
        <title>System-wide temporal characterization of the proteome and phosphoproteome of human embryonic stem cell differentiation.</title>
        <authorList>
            <person name="Rigbolt K.T."/>
            <person name="Prokhorova T.A."/>
            <person name="Akimov V."/>
            <person name="Henningsen J."/>
            <person name="Johansen P.T."/>
            <person name="Kratchmarova I."/>
            <person name="Kassem M."/>
            <person name="Mann M."/>
            <person name="Olsen J.V."/>
            <person name="Blagoev B."/>
        </authorList>
    </citation>
    <scope>PHOSPHORYLATION [LARGE SCALE ANALYSIS] AT SER-44; SER-303; SER-308; SER-309; SER-310; SER-319; SER-428; SER-515; THR-517; SER-1535; SER-1537 AND SER-1602</scope>
    <scope>IDENTIFICATION BY MASS SPECTROMETRY [LARGE SCALE ANALYSIS]</scope>
</reference>
<reference key="23">
    <citation type="journal article" date="2013" name="J. Proteome Res.">
        <title>Toward a comprehensive characterization of a human cancer cell phosphoproteome.</title>
        <authorList>
            <person name="Zhou H."/>
            <person name="Di Palma S."/>
            <person name="Preisinger C."/>
            <person name="Peng M."/>
            <person name="Polat A.N."/>
            <person name="Heck A.J."/>
            <person name="Mohammed S."/>
        </authorList>
    </citation>
    <scope>PHOSPHORYLATION [LARGE SCALE ANALYSIS] AT SER-303; THR-703; SER-1308; SER-1531; SER-1535; SER-1537; THR-1553; SER-1570; SER-1576; SER-1602; THR-1653 AND THR-1679</scope>
    <scope>IDENTIFICATION BY MASS SPECTROMETRY [LARGE SCALE ANALYSIS]</scope>
    <source>
        <tissue>Cervix carcinoma</tissue>
        <tissue>Erythroleukemia</tissue>
    </source>
</reference>
<reference key="24">
    <citation type="journal article" date="2013" name="Mol. Cell. Biol.">
        <title>Senataxin, defective in the neurodegenerative disorder ataxia with oculomotor apraxia 2, lies at the interface of transcription and the DNA damage response.</title>
        <authorList>
            <person name="Yuce O."/>
            <person name="West S.C."/>
        </authorList>
    </citation>
    <scope>INTERACTION WITH SETX</scope>
</reference>
<reference key="25">
    <citation type="journal article" date="2014" name="J. Proteomics">
        <title>An enzyme assisted RP-RPLC approach for in-depth analysis of human liver phosphoproteome.</title>
        <authorList>
            <person name="Bian Y."/>
            <person name="Song C."/>
            <person name="Cheng K."/>
            <person name="Dong M."/>
            <person name="Wang F."/>
            <person name="Huang J."/>
            <person name="Sun D."/>
            <person name="Wang L."/>
            <person name="Ye M."/>
            <person name="Zou H."/>
        </authorList>
    </citation>
    <scope>PHOSPHORYLATION [LARGE SCALE ANALYSIS] AT THR-367; SER-515; SER-531; SER-1535 AND THR-1653</scope>
    <scope>IDENTIFICATION BY MASS SPECTROMETRY [LARGE SCALE ANALYSIS]</scope>
    <source>
        <tissue>Liver</tissue>
    </source>
</reference>
<reference key="26">
    <citation type="journal article" date="2014" name="Nat. Struct. Mol. Biol.">
        <title>Uncovering global SUMOylation signaling networks in a site-specific manner.</title>
        <authorList>
            <person name="Hendriks I.A."/>
            <person name="D'Souza R.C."/>
            <person name="Yang B."/>
            <person name="Verlaan-de Vries M."/>
            <person name="Mann M."/>
            <person name="Vertegaal A.C."/>
        </authorList>
    </citation>
    <scope>SUMOYLATION [LARGE SCALE ANALYSIS] AT LYS-1304; LYS-1565; LYS-1572; LYS-1647 AND LYS-1670</scope>
    <scope>IDENTIFICATION BY MASS SPECTROMETRY [LARGE SCALE ANALYSIS]</scope>
</reference>
<reference key="27">
    <citation type="journal article" date="2014" name="Proc. Natl. Acad. Sci. U.S.A.">
        <title>Mapping of SUMO sites and analysis of SUMOylation changes induced by external stimuli.</title>
        <authorList>
            <person name="Impens F."/>
            <person name="Radoshevich L."/>
            <person name="Cossart P."/>
            <person name="Ribet D."/>
        </authorList>
    </citation>
    <scope>SUMOYLATION [LARGE SCALE ANALYSIS] AT LYS-1304</scope>
    <scope>IDENTIFICATION BY MASS SPECTROMETRY [LARGE SCALE ANALYSIS]</scope>
</reference>
<reference key="28">
    <citation type="journal article" date="2015" name="Cell Rep.">
        <title>SUMO-2 orchestrates chromatin modifiers in response to DNA damage.</title>
        <authorList>
            <person name="Hendriks I.A."/>
            <person name="Treffers L.W."/>
            <person name="Verlaan-de Vries M."/>
            <person name="Olsen J.V."/>
            <person name="Vertegaal A.C."/>
        </authorList>
    </citation>
    <scope>SUMOYLATION [LARGE SCALE ANALYSIS] AT LYS-1647 AND LYS-1670</scope>
    <scope>IDENTIFICATION BY MASS SPECTROMETRY [LARGE SCALE ANALYSIS]</scope>
</reference>
<reference key="29">
    <citation type="journal article" date="2015" name="Genes Dev.">
        <title>Screen identifies bromodomain protein ZMYND8 in chromatin recognition of transcription-associated DNA damage that promotes homologous recombination.</title>
        <authorList>
            <person name="Gong F."/>
            <person name="Chiu L.Y."/>
            <person name="Cox B."/>
            <person name="Aymard F."/>
            <person name="Clouaire T."/>
            <person name="Leung J.W."/>
            <person name="Cammarata M."/>
            <person name="Perez M."/>
            <person name="Agarwal P."/>
            <person name="Brodbelt J.S."/>
            <person name="Legube G."/>
            <person name="Miller K.M."/>
        </authorList>
    </citation>
    <scope>FUNCTION</scope>
    <scope>INTERACTION WITH ZMYND8; HDAC1 AND HDAC2</scope>
    <scope>IDENTIFICATION BY MASS SPECTROMETRY</scope>
</reference>
<reference key="30">
    <citation type="journal article" date="2015" name="Mol. Cell. Proteomics">
        <title>System-wide analysis of SUMOylation dynamics in response to replication stress reveals novel small ubiquitin-like modified target proteins and acceptor lysines relevant for genome stability.</title>
        <authorList>
            <person name="Xiao Z."/>
            <person name="Chang J.G."/>
            <person name="Hendriks I.A."/>
            <person name="Sigurdsson J.O."/>
            <person name="Olsen J.V."/>
            <person name="Vertegaal A.C."/>
        </authorList>
    </citation>
    <scope>SUMOYLATION [LARGE SCALE ANALYSIS] AT LYS-1304; LYS-1572; LYS-1643; LYS-1647 AND LYS-1670</scope>
    <scope>IDENTIFICATION BY MASS SPECTROMETRY [LARGE SCALE ANALYSIS]</scope>
</reference>
<reference key="31">
    <citation type="journal article" date="2016" name="Cell Rep.">
        <title>ZMYND8 Co-localizes with NuRD on Target Genes and Regulates Poly(ADP-Ribose)-Dependent Recruitment of GATAD2A/NuRD to Sites of DNA Damage.</title>
        <authorList>
            <person name="Spruijt C.G."/>
            <person name="Luijsterburg M.S."/>
            <person name="Menafra R."/>
            <person name="Lindeboom R.G."/>
            <person name="Jansen P.W."/>
            <person name="Edupuganti R.R."/>
            <person name="Baltissen M.P."/>
            <person name="Wiegant W.W."/>
            <person name="Voelker-Albert M.C."/>
            <person name="Matarese F."/>
            <person name="Mensinga A."/>
            <person name="Poser I."/>
            <person name="Vos H.R."/>
            <person name="Stunnenberg H.G."/>
            <person name="van Attikum H."/>
            <person name="Vermeulen M."/>
        </authorList>
    </citation>
    <scope>SUBCELLULAR LOCATION</scope>
</reference>
<reference key="32">
    <citation type="journal article" date="2017" name="Nat. Struct. Mol. Biol.">
        <title>Site-specific mapping of the human SUMO proteome reveals co-modification with phosphorylation.</title>
        <authorList>
            <person name="Hendriks I.A."/>
            <person name="Lyon D."/>
            <person name="Young C."/>
            <person name="Jensen L.J."/>
            <person name="Vertegaal A.C."/>
            <person name="Nielsen M.L."/>
        </authorList>
    </citation>
    <scope>SUMOYLATION [LARGE SCALE ANALYSIS] AT LYS-133; LYS-146; LYS-179; LYS-297; LYS-304; LYS-696; LYS-711; LYS-1212; LYS-1228; LYS-1239; LYS-1304; LYS-1528; LYS-1529; LYS-1565; LYS-1572; LYS-1584; LYS-1606; LYS-1617; LYS-1636; LYS-1643; LYS-1647; LYS-1660; LYS-1670; LYS-1687 AND LYS-1865</scope>
    <scope>IDENTIFICATION BY MASS SPECTROMETRY [LARGE SCALE ANALYSIS]</scope>
</reference>
<reference key="33">
    <citation type="journal article" date="2017" name="Nucleic Acids Res.">
        <title>CHD3 and CHD4 form distinct NuRD complexes with different yet overlapping functionality.</title>
        <authorList>
            <person name="Hoffmeister H."/>
            <person name="Fuchs A."/>
            <person name="Erdel F."/>
            <person name="Pinz S."/>
            <person name="Groebner-Ferreira R."/>
            <person name="Bruckmann A."/>
            <person name="Deutzmann R."/>
            <person name="Schwartz U."/>
            <person name="Maldonado R."/>
            <person name="Huber C."/>
            <person name="Dendorfer A.S."/>
            <person name="Rippe K."/>
            <person name="Laengst G."/>
        </authorList>
    </citation>
    <scope>FUNCTION</scope>
    <scope>CATALYTIC ACTIVITY</scope>
    <scope>IDENTIFICATION IN THE NURD COMPLEX</scope>
    <scope>INTERACTION WITH CBX1; CBX3; CBX5; HDAC1; MTA1 AND RBBP7</scope>
    <scope>IDENTIFICATION BY MASS SPECTROMETRY</scope>
    <scope>SUBCELLULAR LOCATION</scope>
    <scope>TISSUE SPECIFICITY</scope>
</reference>
<reference key="34">
    <citation type="journal article" date="2018" name="Cell Rep.">
        <title>Positive Regulation of Transcription by Human ZMYND8 through Its Association with P-TEFb Complex.</title>
        <authorList>
            <person name="Ghosh K."/>
            <person name="Tang M."/>
            <person name="Kumari N."/>
            <person name="Nandy A."/>
            <person name="Basu S."/>
            <person name="Mall D.P."/>
            <person name="Rai K."/>
            <person name="Biswas D."/>
        </authorList>
    </citation>
    <scope>INTERACTION WITH ZMYND8</scope>
</reference>
<reference key="35">
    <citation type="journal article" date="2021" name="FEBS J.">
        <title>Cross-linking mass spectrometry reveals the structural topology of peripheral NuRD subunits relative to the core complex.</title>
        <authorList>
            <person name="Spruijt C.G."/>
            <person name="Graewe C."/>
            <person name="Kleinendorst S.C."/>
            <person name="Baltissen M.P.A."/>
            <person name="Vermeulen M."/>
        </authorList>
    </citation>
    <scope>IDENTIFICATION IN THE NURD COMPLEX</scope>
    <scope>INTERACTION WITH GATAD2A</scope>
    <scope>IDENTIFICATION BY MASS SPECTROMETRY</scope>
    <scope>SUBCELLULAR LOCATION</scope>
</reference>
<reference key="36">
    <citation type="journal article" date="2022" name="Cell Death Dis.">
        <title>ZMYND8 suppresses MAPT213 LncRNA transcription to promote neuronal differentiation.</title>
        <authorList>
            <person name="Adhikary S."/>
            <person name="Singh V."/>
            <person name="Choudhari R."/>
            <person name="Yang B."/>
            <person name="Adhikari S."/>
            <person name="Ramos E.I."/>
            <person name="Chaudhuri S."/>
            <person name="Roy S."/>
            <person name="Gadad S.S."/>
            <person name="Das C."/>
        </authorList>
    </citation>
    <scope>INTERACTION WITH ZMYND8 AND HDAC1</scope>
</reference>
<reference evidence="32 33" key="37">
    <citation type="journal article" date="2003" name="Structure">
        <title>Engineering a protein scaffold from a PHD finger.</title>
        <authorList>
            <person name="Kwan A.H.Y."/>
            <person name="Gell D.A."/>
            <person name="Verger A."/>
            <person name="Crossley M."/>
            <person name="Matthews J.M."/>
            <person name="Mackay J.P."/>
        </authorList>
    </citation>
    <scope>STRUCTURE BY NMR OF 446-501</scope>
</reference>
<reference key="38">
    <citation type="submission" date="2007-08" db="PDB data bank">
        <title>Solution structures of the chromo domain of human chromodomain helicase-DNA-binding protein 4.</title>
        <authorList>
            <consortium name="RIKEN structural genomics initiative (RSGI)"/>
        </authorList>
    </citation>
    <scope>STRUCTURE BY NMR OF 618-674</scope>
</reference>
<reference evidence="34" key="39">
    <citation type="journal article" date="2018" name="J. Biol. Chem.">
        <title>The BRD3 ET domain recognizes a short peptide motif through a mechanism that is conserved across chromatin remodelers and transcriptional regulators.</title>
        <authorList>
            <person name="Wai D.C.C."/>
            <person name="Szyszka T.N."/>
            <person name="Campbell A.E."/>
            <person name="Kwong C."/>
            <person name="Wilkinson-White L.E."/>
            <person name="Silva A.P.G."/>
            <person name="Low J.K.K."/>
            <person name="Kwan A.H."/>
            <person name="Gamsjaeger R."/>
            <person name="Chalmers J.D."/>
            <person name="Patrick W.M."/>
            <person name="Lu B."/>
            <person name="Vakoc C.R."/>
            <person name="Blobel G.A."/>
            <person name="Mackay J.P."/>
        </authorList>
    </citation>
    <scope>STRUCTURE BY NMR OF 290-301 IN COMPLEX WITH BRD3</scope>
    <scope>INTERACTION WITH BRD3</scope>
    <scope>DOMAIN</scope>
</reference>
<reference evidence="35 36" key="40">
    <citation type="journal article" date="2020" name="Elife">
        <title>Nucleosome-CHD4 chromatin remodeler structure maps human disease mutations.</title>
        <authorList>
            <person name="Farnung L."/>
            <person name="Ochmann M."/>
            <person name="Cramer P."/>
        </authorList>
    </citation>
    <scope>STRUCTURE BY ELECTRON MICROSCOPY (3.10 ANGSTROMS) IN COMPLEX WITH NUCLEOSOME AND ZINC</scope>
    <scope>FUNCTION</scope>
    <scope>COFACTOR</scope>
    <scope>INTERACTION WITH HISTONES H3 AND H4</scope>
</reference>
<reference key="41">
    <citation type="journal article" date="2016" name="Am. J. Hum. Genet.">
        <title>De novo mutations in CHD4, an ATP-dependent chromatin remodeler gene, cause an intellectual disability syndrome with distinctive dysmorphisms.</title>
        <authorList>
            <consortium name="DDD Study"/>
            <person name="Weiss K."/>
            <person name="Terhal P.A."/>
            <person name="Cohen L."/>
            <person name="Bruccoleri M."/>
            <person name="Irving M."/>
            <person name="Martinez A.F."/>
            <person name="Rosenfeld J.A."/>
            <person name="Machol K."/>
            <person name="Yang Y."/>
            <person name="Liu P."/>
            <person name="Walkiewicz M."/>
            <person name="Beuten J."/>
            <person name="Gomez-Ospina N."/>
            <person name="Haude K."/>
            <person name="Fong C.T."/>
            <person name="Enns G.M."/>
            <person name="Bernstein J.A."/>
            <person name="Fan J."/>
            <person name="Gotway G."/>
            <person name="Ghorbani M."/>
            <person name="van Gassen K."/>
            <person name="Monroe G.R."/>
            <person name="van Haaften G."/>
            <person name="Basel-Vanagaite L."/>
            <person name="Yang X.J."/>
            <person name="Campeau P.M."/>
            <person name="Muenke M."/>
        </authorList>
    </citation>
    <scope>VARIANTS SIHIWES ASP-1003; GLN-1127; LEU-1148 AND LEU-1173</scope>
    <scope>SUBCELLULAR LOCATION</scope>
    <scope>INTERACTION WITH HDAC1</scope>
    <scope>INVOLVEMENT IN SIHIWES</scope>
    <scope>CHARACTERIZATION OF VARIANTS SIHIWES GLN-1127 AND LEU-1173</scope>
</reference>
<reference key="42">
    <citation type="journal article" date="2016" name="Nat. Genet.">
        <title>Distinct genetic architectures for syndromic and nonsyndromic congenital heart defects identified by exome sequencing.</title>
        <authorList>
            <consortium name="INTERVAL Study"/>
            <consortium name="UK10K Consortium"/>
            <consortium name="Deciphering Developmental Disorders Study"/>
            <person name="Sifrim A."/>
            <person name="Hitz M.P."/>
            <person name="Wilsdon A."/>
            <person name="Breckpot J."/>
            <person name="Turki S.H."/>
            <person name="Thienpont B."/>
            <person name="McRae J."/>
            <person name="Fitzgerald T.W."/>
            <person name="Singh T."/>
            <person name="Swaminathan G.J."/>
            <person name="Prigmore E."/>
            <person name="Rajan D."/>
            <person name="Abdul-Khaliq H."/>
            <person name="Banka S."/>
            <person name="Bauer U.M."/>
            <person name="Bentham J."/>
            <person name="Berger F."/>
            <person name="Bhattacharya S."/>
            <person name="Bu'Lock F."/>
            <person name="Canham N."/>
            <person name="Colgiu I.G."/>
            <person name="Cosgrove C."/>
            <person name="Cox H."/>
            <person name="Daehnert I."/>
            <person name="Daly A."/>
            <person name="Danesh J."/>
            <person name="Fryer A."/>
            <person name="Gewillig M."/>
            <person name="Hobson E."/>
            <person name="Hoff K."/>
            <person name="Homfray T."/>
            <person name="Kahlert A.K."/>
            <person name="Ketley A."/>
            <person name="Kramer H.H."/>
            <person name="Lachlan K."/>
            <person name="Lampe A.K."/>
            <person name="Louw J.J."/>
            <person name="Manickara A.K."/>
            <person name="Manase D."/>
            <person name="McCarthy K.P."/>
            <person name="Metcalfe K."/>
            <person name="Moore C."/>
            <person name="Newbury-Ecob R."/>
            <person name="Omer S.O."/>
            <person name="Ouwehand W.H."/>
            <person name="Park S.M."/>
            <person name="Parker M.J."/>
            <person name="Pickardt T."/>
            <person name="Pollard M.O."/>
            <person name="Robert L."/>
            <person name="Roberts D.J."/>
            <person name="Sambrook J."/>
            <person name="Setchfield K."/>
            <person name="Stiller B."/>
            <person name="Thornborough C."/>
            <person name="Toka O."/>
            <person name="Watkins H."/>
            <person name="Williams D."/>
            <person name="Wright M."/>
            <person name="Mital S."/>
            <person name="Daubeney P.E."/>
            <person name="Keavney B."/>
            <person name="Goodship J."/>
            <person name="Abu-Sulaiman R.M."/>
            <person name="Klaassen S."/>
            <person name="Wright C.F."/>
            <person name="Firth H.V."/>
            <person name="Barrett J.C."/>
            <person name="Devriendt K."/>
            <person name="FitzPatrick D.R."/>
            <person name="Brook J.D."/>
            <person name="Hurles M.E."/>
        </authorList>
    </citation>
    <scope>VARIANTS SIHIWES TYR-851; HIS-1068 AND ILE-1608</scope>
    <scope>INVOLVEMENT IN SIHIWES</scope>
</reference>
<protein>
    <recommendedName>
        <fullName>Chromodomain-helicase-DNA-binding protein 4</fullName>
        <shortName>CHD-4</shortName>
        <ecNumber evidence="22">3.6.4.-</ecNumber>
    </recommendedName>
    <alternativeName>
        <fullName>ATP-dependent helicase CHD4</fullName>
    </alternativeName>
    <alternativeName>
        <fullName>Mi-2 autoantigen 218 kDa protein</fullName>
    </alternativeName>
    <alternativeName>
        <fullName>Mi2-beta</fullName>
    </alternativeName>
</protein>
<comment type="function">
    <text evidence="2 13 14 18 22 25 29">ATP-dependent chromatin-remodeling factor that binds and distorts nucleosomal DNA (PubMed:28977666, PubMed:32543371). Acts as a component of the histone deacetylase NuRD complex which participates in the remodeling of chromatin (PubMed:16428440, PubMed:17626165, PubMed:28977666, PubMed:9804427). Localizes to acetylated damaged chromatin in a ZMYND8-dependent manner, to promote transcriptional repression and double-strand break repair by homologous recombination (PubMed:25593309). Involved in neurogenesis (By similarity).</text>
</comment>
<comment type="catalytic activity">
    <reaction evidence="22">
        <text>ATP + H2O = ADP + phosphate + H(+)</text>
        <dbReference type="Rhea" id="RHEA:13065"/>
        <dbReference type="ChEBI" id="CHEBI:15377"/>
        <dbReference type="ChEBI" id="CHEBI:15378"/>
        <dbReference type="ChEBI" id="CHEBI:30616"/>
        <dbReference type="ChEBI" id="CHEBI:43474"/>
        <dbReference type="ChEBI" id="CHEBI:456216"/>
    </reaction>
</comment>
<comment type="cofactor">
    <cofactor evidence="25 35 36">
        <name>Zn(2+)</name>
        <dbReference type="ChEBI" id="CHEBI:29105"/>
    </cofactor>
</comment>
<comment type="subunit">
    <text evidence="2 8 9 10 11 12 13 14 15 16 17 18 20 22 23 24 26 27 29">Component of the nucleosome remodeling and deacetylase (NuRD) repressor complex, composed of core proteins MTA1, MTA2, MTA3, RBBP4, RBBP7, HDAC1, HDAC2, MBD2, MBD3, and peripherally associated proteins CDK2AP1, CDK2AP2, GATAD2A, GATAD2B, CHD3, CHD4 and CHD5 (PubMed:10204490, PubMed:15454082, PubMed:16428440, PubMed:28977666, PubMed:33283408, PubMed:9804427). The exact stoichiometry of the NuRD complex is unknown, and some subunits such as MBD2 and MBD3, GATAD2A and GATAD2B, and CHD3, CHD4 and CHD5 define mutually exclusive NuRD complexes (PubMed:16428440, PubMed:28977666, PubMed:33283408). Interacts with IKFZ1; the interaction is direct and when in part of the NuRD complex (By similarity). Part of a complex containing ATR and HDAC2 (PubMed:10545197). Interacts with HDAC2; the interaction is direct (PubMed:12198550, PubMed:25593309). Interacts with the cohesin complex component RAD21; the interaction is direct (PubMed:12198550). Interacts with the ISWI chromatin remodeling complex component SMARCA5; the interaction is direct (PubMed:12198550). Interacts with ZGPAT; the interaction is direct (PubMed:19644445). Interacts with ZMYND8; the interaction is direct, appears to occur with monomeric ZMYND8, and is increased following DNA damage (PubMed:25593309, PubMed:30134174, PubMed:36064715). Interacts with BCL6 (PubMed:15454082). Interacts with BRD4 (PubMed:21555454). Interacts with CBX1 (PubMed:28977666). Interacts with CBX3 (PubMed:28977666). Interacts with CBX5 (PubMed:28977666). Interacts with GATAD2A (PubMed:33283408). Interacts with HDAC1 (PubMed:25593309, PubMed:27616479, PubMed:28977666, PubMed:36064715). Interacts with KLF1; the interaction depends on sumoylation of KLF1, and leads to its transcriptional repression (By similarity). Interacts with MTA1 (PubMed:28977666). Interacts with PCNT (PubMed:17626165). Interacts with RBBP7 (PubMed:28977666). Interacts with SETX (PubMed:23149945). Interacts with TRIM27 (PubMed:14530259). Interacts with histone H3 (PubMed:32543371). Interacts with histone H4 (PubMed:32543371). Does not interact with PWWP2A (By similarity). Does not interact with PWWP2B (By similarity). Interacts (via KIKL motif) with BRD3 (via NET domain) (PubMed:29567837).</text>
</comment>
<comment type="interaction">
    <interactant intactId="EBI-372916">
        <id>Q14839</id>
    </interactant>
    <interactant intactId="EBI-301834">
        <id>Q13547</id>
        <label>HDAC1</label>
    </interactant>
    <organismsDiffer>false</organismsDiffer>
    <experiments>15</experiments>
</comment>
<comment type="interaction">
    <interactant intactId="EBI-372916">
        <id>Q14839</id>
    </interactant>
    <interactant intactId="EBI-447544">
        <id>P01106</id>
        <label>MYC</label>
    </interactant>
    <organismsDiffer>false</organismsDiffer>
    <experiments>2</experiments>
</comment>
<comment type="interaction">
    <interactant intactId="EBI-372916">
        <id>Q14839</id>
    </interactant>
    <interactant intactId="EBI-5564776">
        <id>Q17R98</id>
        <label>ZNF827</label>
    </interactant>
    <organismsDiffer>false</organismsDiffer>
    <experiments>2</experiments>
</comment>
<comment type="interaction">
    <interactant intactId="EBI-372916">
        <id>Q14839</id>
    </interactant>
    <interactant intactId="EBI-8411807">
        <id>P70326</id>
        <label>Tbx5</label>
    </interactant>
    <organismsDiffer>true</organismsDiffer>
    <experiments>3</experiments>
</comment>
<comment type="subcellular location">
    <subcellularLocation>
        <location evidence="14 20 21 22 26">Nucleus</location>
    </subcellularLocation>
    <subcellularLocation>
        <location evidence="14">Cytoplasm</location>
        <location evidence="14">Cytoskeleton</location>
        <location evidence="14">Microtubule organizing center</location>
        <location evidence="14">Centrosome</location>
    </subcellularLocation>
    <text evidence="2 21 22">Associates with centrosomes in interphase (By similarity). Localizes to sites of DNA damage in a manner dependent on ZMYND8 and ZNF687 (PubMed:27732854, PubMed:28977666).</text>
</comment>
<comment type="alternative products">
    <event type="alternative splicing"/>
    <isoform>
        <id>Q14839-1</id>
        <name>1</name>
        <sequence type="displayed"/>
    </isoform>
    <isoform>
        <id>Q14839-2</id>
        <name>2</name>
        <sequence type="described" ref="VSP_011416"/>
    </isoform>
</comment>
<comment type="tissue specificity">
    <text evidence="22">Widely expressed.</text>
</comment>
<comment type="domain">
    <text evidence="23">The KIKL motif recognizes and binds the NET domain of BRD3.</text>
</comment>
<comment type="disease" evidence="19 20">
    <disease id="DI-04857">
        <name>Sifrim-Hitz-Weiss syndrome</name>
        <acronym>SIHIWES</acronym>
        <description>An autosomal dominant syndrome characterized by intellectual disability, variable congenital defects affecting cardiac, skeletal, and urogenital systems. Short stature, macrocephaly, hearing impairment, and facial dysmorphism are present in some patients.</description>
        <dbReference type="MIM" id="617159"/>
    </disease>
    <text>The disease is caused by variants affecting the gene represented in this entry.</text>
</comment>
<comment type="miscellaneous">
    <text>One of the main antigens reacting with anti-MI-2 positive sera of dermatomyositis.</text>
</comment>
<comment type="similarity">
    <text evidence="31">Belongs to the SNF2/RAD54 helicase family.</text>
</comment>
<dbReference type="EC" id="3.6.4.-" evidence="22"/>
<dbReference type="EMBL" id="X86691">
    <property type="protein sequence ID" value="CAA60384.1"/>
    <property type="molecule type" value="mRNA"/>
</dbReference>
<dbReference type="EMBL" id="AC006064">
    <property type="status" value="NOT_ANNOTATED_CDS"/>
    <property type="molecule type" value="Genomic_DNA"/>
</dbReference>
<dbReference type="EMBL" id="BC038596">
    <property type="protein sequence ID" value="AAH38596.1"/>
    <property type="molecule type" value="mRNA"/>
</dbReference>
<dbReference type="CCDS" id="CCDS8552.1">
    <molecule id="Q14839-1"/>
</dbReference>
<dbReference type="RefSeq" id="NP_001264.2">
    <molecule id="Q14839-1"/>
    <property type="nucleotide sequence ID" value="NM_001273.5"/>
</dbReference>
<dbReference type="RefSeq" id="NP_001284482.1">
    <property type="nucleotide sequence ID" value="NM_001297553.1"/>
</dbReference>
<dbReference type="RefSeq" id="XP_006719021.1">
    <property type="nucleotide sequence ID" value="XM_006718958.1"/>
</dbReference>
<dbReference type="PDB" id="1MM2">
    <property type="method" value="NMR"/>
    <property type="chains" value="A=446-501"/>
</dbReference>
<dbReference type="PDB" id="1MM3">
    <property type="method" value="NMR"/>
    <property type="chains" value="A=446-501"/>
</dbReference>
<dbReference type="PDB" id="2EE1">
    <property type="method" value="NMR"/>
    <property type="chains" value="A=618-674"/>
</dbReference>
<dbReference type="PDB" id="2L5U">
    <property type="method" value="NMR"/>
    <property type="chains" value="A=365-420"/>
</dbReference>
<dbReference type="PDB" id="2L75">
    <property type="method" value="NMR"/>
    <property type="chains" value="A=446-501"/>
</dbReference>
<dbReference type="PDB" id="2N5N">
    <property type="method" value="NMR"/>
    <property type="chains" value="A=145-225"/>
</dbReference>
<dbReference type="PDB" id="4O9I">
    <property type="method" value="X-ray"/>
    <property type="resolution" value="2.60 A"/>
    <property type="chains" value="X=499-677"/>
</dbReference>
<dbReference type="PDB" id="6BGG">
    <property type="method" value="NMR"/>
    <property type="chains" value="A=290-301"/>
</dbReference>
<dbReference type="PDB" id="6Q3M">
    <property type="method" value="X-ray"/>
    <property type="resolution" value="2.52 A"/>
    <property type="chains" value="A/B/C/D=444-679"/>
</dbReference>
<dbReference type="PDB" id="6RYR">
    <property type="method" value="EM"/>
    <property type="resolution" value="3.10 A"/>
    <property type="chains" value="W=1-1912"/>
</dbReference>
<dbReference type="PDB" id="6RYU">
    <property type="method" value="EM"/>
    <property type="resolution" value="4.00 A"/>
    <property type="chains" value="V/W=1-1912"/>
</dbReference>
<dbReference type="PDB" id="8D4Y">
    <property type="method" value="X-ray"/>
    <property type="resolution" value="2.90 A"/>
    <property type="chains" value="A/B=1380-1810"/>
</dbReference>
<dbReference type="PDBsum" id="1MM2"/>
<dbReference type="PDBsum" id="1MM3"/>
<dbReference type="PDBsum" id="2EE1"/>
<dbReference type="PDBsum" id="2L5U"/>
<dbReference type="PDBsum" id="2L75"/>
<dbReference type="PDBsum" id="2N5N"/>
<dbReference type="PDBsum" id="4O9I"/>
<dbReference type="PDBsum" id="6BGG"/>
<dbReference type="PDBsum" id="6Q3M"/>
<dbReference type="PDBsum" id="6RYR"/>
<dbReference type="PDBsum" id="6RYU"/>
<dbReference type="PDBsum" id="8D4Y"/>
<dbReference type="BMRB" id="Q14839"/>
<dbReference type="EMDB" id="EMD-10058"/>
<dbReference type="EMDB" id="EMD-10059"/>
<dbReference type="SMR" id="Q14839"/>
<dbReference type="BioGRID" id="107533">
    <property type="interactions" value="937"/>
</dbReference>
<dbReference type="ComplexPortal" id="CPX-880">
    <property type="entry name" value="MBD2/NuRD nucleosome remodeling and deacetylase complex"/>
</dbReference>
<dbReference type="ComplexPortal" id="CPX-922">
    <property type="entry name" value="MBD3/NuRD nucleosome remodeling and deacetylase complex"/>
</dbReference>
<dbReference type="CORUM" id="Q14839"/>
<dbReference type="DIP" id="DIP-31183N"/>
<dbReference type="FunCoup" id="Q14839">
    <property type="interactions" value="3976"/>
</dbReference>
<dbReference type="IntAct" id="Q14839">
    <property type="interactions" value="145"/>
</dbReference>
<dbReference type="MINT" id="Q14839"/>
<dbReference type="STRING" id="9606.ENSP00000440542"/>
<dbReference type="ChEMBL" id="CHEMBL4105742"/>
<dbReference type="GlyGen" id="Q14839">
    <property type="glycosylation" value="7 sites, 1 N-linked glycan (1 site), 1 O-linked glycan (1 site)"/>
</dbReference>
<dbReference type="iPTMnet" id="Q14839"/>
<dbReference type="MetOSite" id="Q14839"/>
<dbReference type="PhosphoSitePlus" id="Q14839"/>
<dbReference type="SwissPalm" id="Q14839"/>
<dbReference type="BioMuta" id="CHD4"/>
<dbReference type="DMDM" id="311033360"/>
<dbReference type="jPOST" id="Q14839"/>
<dbReference type="MassIVE" id="Q14839"/>
<dbReference type="PaxDb" id="9606-ENSP00000349508"/>
<dbReference type="PeptideAtlas" id="Q14839"/>
<dbReference type="ProteomicsDB" id="60204">
    <molecule id="Q14839-1"/>
</dbReference>
<dbReference type="ProteomicsDB" id="60205">
    <molecule id="Q14839-2"/>
</dbReference>
<dbReference type="Pumba" id="Q14839"/>
<dbReference type="ABCD" id="Q14839">
    <property type="antibodies" value="2 sequenced antibodies"/>
</dbReference>
<dbReference type="Antibodypedia" id="11019">
    <property type="antibodies" value="397 antibodies from 40 providers"/>
</dbReference>
<dbReference type="DNASU" id="1108"/>
<dbReference type="Ensembl" id="ENST00000544040.7">
    <molecule id="Q14839-1"/>
    <property type="protein sequence ID" value="ENSP00000440542.2"/>
    <property type="gene ID" value="ENSG00000111642.16"/>
</dbReference>
<dbReference type="Ensembl" id="ENST00000645095.1">
    <molecule id="Q14839-2"/>
    <property type="protein sequence ID" value="ENSP00000496634.1"/>
    <property type="gene ID" value="ENSG00000111642.16"/>
</dbReference>
<dbReference type="GeneID" id="1108"/>
<dbReference type="KEGG" id="hsa:1108"/>
<dbReference type="MANE-Select" id="ENST00000544040.7">
    <property type="protein sequence ID" value="ENSP00000440542.2"/>
    <property type="RefSeq nucleotide sequence ID" value="NM_001273.5"/>
    <property type="RefSeq protein sequence ID" value="NP_001264.2"/>
</dbReference>
<dbReference type="UCSC" id="uc001qpo.4">
    <molecule id="Q14839-1"/>
    <property type="organism name" value="human"/>
</dbReference>
<dbReference type="AGR" id="HGNC:1919"/>
<dbReference type="CTD" id="1108"/>
<dbReference type="DisGeNET" id="1108"/>
<dbReference type="GeneCards" id="CHD4"/>
<dbReference type="GeneReviews" id="CHD4"/>
<dbReference type="HGNC" id="HGNC:1919">
    <property type="gene designation" value="CHD4"/>
</dbReference>
<dbReference type="HPA" id="ENSG00000111642">
    <property type="expression patterns" value="Low tissue specificity"/>
</dbReference>
<dbReference type="MalaCards" id="CHD4"/>
<dbReference type="MIM" id="603277">
    <property type="type" value="gene"/>
</dbReference>
<dbReference type="MIM" id="617159">
    <property type="type" value="phenotype"/>
</dbReference>
<dbReference type="neXtProt" id="NX_Q14839"/>
<dbReference type="OpenTargets" id="ENSG00000111642"/>
<dbReference type="Orphanet" id="653712">
    <property type="disease" value="CHD4-related neurodevelopmental disorder"/>
</dbReference>
<dbReference type="PharmGKB" id="PA26455"/>
<dbReference type="VEuPathDB" id="HostDB:ENSG00000111642"/>
<dbReference type="eggNOG" id="KOG0383">
    <property type="taxonomic scope" value="Eukaryota"/>
</dbReference>
<dbReference type="GeneTree" id="ENSGT00940000155088"/>
<dbReference type="HOGENOM" id="CLU_000315_22_3_1"/>
<dbReference type="InParanoid" id="Q14839"/>
<dbReference type="OMA" id="KAKSRFM"/>
<dbReference type="OrthoDB" id="5857104at2759"/>
<dbReference type="PAN-GO" id="Q14839">
    <property type="GO annotations" value="10 GO annotations based on evolutionary models"/>
</dbReference>
<dbReference type="PhylomeDB" id="Q14839"/>
<dbReference type="TreeFam" id="TF106448"/>
<dbReference type="PathwayCommons" id="Q14839"/>
<dbReference type="Reactome" id="R-HSA-3214815">
    <property type="pathway name" value="HDACs deacetylate histones"/>
</dbReference>
<dbReference type="Reactome" id="R-HSA-427389">
    <property type="pathway name" value="ERCC6 (CSB) and EHMT2 (G9a) positively regulate rRNA expression"/>
</dbReference>
<dbReference type="Reactome" id="R-HSA-6804758">
    <property type="pathway name" value="Regulation of TP53 Activity through Acetylation"/>
</dbReference>
<dbReference type="Reactome" id="R-HSA-73762">
    <property type="pathway name" value="RNA Polymerase I Transcription Initiation"/>
</dbReference>
<dbReference type="Reactome" id="R-HSA-8943724">
    <property type="pathway name" value="Regulation of PTEN gene transcription"/>
</dbReference>
<dbReference type="Reactome" id="R-HSA-9031628">
    <property type="pathway name" value="NGF-stimulated transcription"/>
</dbReference>
<dbReference type="Reactome" id="R-HSA-9679191">
    <property type="pathway name" value="Potential therapeutics for SARS"/>
</dbReference>
<dbReference type="Reactome" id="R-HSA-9843940">
    <property type="pathway name" value="Regulation of endogenous retroelements by KRAB-ZFP proteins"/>
</dbReference>
<dbReference type="Reactome" id="R-HSA-9844594">
    <property type="pathway name" value="Transcriptional regulation of brown and beige adipocyte differentiation by EBF2"/>
</dbReference>
<dbReference type="Reactome" id="R-HSA-9845323">
    <property type="pathway name" value="Regulation of endogenous retroelements by Piwi-interacting RNAs (piRNAs)"/>
</dbReference>
<dbReference type="SignaLink" id="Q14839"/>
<dbReference type="SIGNOR" id="Q14839"/>
<dbReference type="BioGRID-ORCS" id="1108">
    <property type="hits" value="551 hits in 1158 CRISPR screens"/>
</dbReference>
<dbReference type="CD-CODE" id="91857CE7">
    <property type="entry name" value="Nucleolus"/>
</dbReference>
<dbReference type="ChiTaRS" id="CHD4">
    <property type="organism name" value="human"/>
</dbReference>
<dbReference type="EvolutionaryTrace" id="Q14839"/>
<dbReference type="GeneWiki" id="CHD4"/>
<dbReference type="GenomeRNAi" id="1108"/>
<dbReference type="Pharos" id="Q14839">
    <property type="development level" value="Tchem"/>
</dbReference>
<dbReference type="PRO" id="PR:Q14839"/>
<dbReference type="Proteomes" id="UP000005640">
    <property type="component" value="Chromosome 12"/>
</dbReference>
<dbReference type="RNAct" id="Q14839">
    <property type="molecule type" value="protein"/>
</dbReference>
<dbReference type="Bgee" id="ENSG00000111642">
    <property type="expression patterns" value="Expressed in ventricular zone and 198 other cell types or tissues"/>
</dbReference>
<dbReference type="ExpressionAtlas" id="Q14839">
    <property type="expression patterns" value="baseline and differential"/>
</dbReference>
<dbReference type="GO" id="GO:0005813">
    <property type="term" value="C:centrosome"/>
    <property type="evidence" value="ECO:0000314"/>
    <property type="project" value="UniProtKB"/>
</dbReference>
<dbReference type="GO" id="GO:0150048">
    <property type="term" value="C:cerebellar granule cell to Purkinje cell synapse"/>
    <property type="evidence" value="ECO:0007669"/>
    <property type="project" value="Ensembl"/>
</dbReference>
<dbReference type="GO" id="GO:0000785">
    <property type="term" value="C:chromatin"/>
    <property type="evidence" value="ECO:0007005"/>
    <property type="project" value="UniProtKB"/>
</dbReference>
<dbReference type="GO" id="GO:0000781">
    <property type="term" value="C:chromosome, telomeric region"/>
    <property type="evidence" value="ECO:0000314"/>
    <property type="project" value="UniProtKB"/>
</dbReference>
<dbReference type="GO" id="GO:0005737">
    <property type="term" value="C:cytoplasm"/>
    <property type="evidence" value="ECO:0000314"/>
    <property type="project" value="UniProtKB"/>
</dbReference>
<dbReference type="GO" id="GO:0016020">
    <property type="term" value="C:membrane"/>
    <property type="evidence" value="ECO:0007005"/>
    <property type="project" value="UniProtKB"/>
</dbReference>
<dbReference type="GO" id="GO:0005654">
    <property type="term" value="C:nucleoplasm"/>
    <property type="evidence" value="ECO:0000314"/>
    <property type="project" value="HPA"/>
</dbReference>
<dbReference type="GO" id="GO:0005634">
    <property type="term" value="C:nucleus"/>
    <property type="evidence" value="ECO:0000314"/>
    <property type="project" value="UniProtKB"/>
</dbReference>
<dbReference type="GO" id="GO:0016581">
    <property type="term" value="C:NuRD complex"/>
    <property type="evidence" value="ECO:0000314"/>
    <property type="project" value="UniProtKB"/>
</dbReference>
<dbReference type="GO" id="GO:0032991">
    <property type="term" value="C:protein-containing complex"/>
    <property type="evidence" value="ECO:0007005"/>
    <property type="project" value="UniProtKB"/>
</dbReference>
<dbReference type="GO" id="GO:0090575">
    <property type="term" value="C:RNA polymerase II transcription regulator complex"/>
    <property type="evidence" value="ECO:0000314"/>
    <property type="project" value="ARUK-UCL"/>
</dbReference>
<dbReference type="GO" id="GO:0090734">
    <property type="term" value="C:site of DNA damage"/>
    <property type="evidence" value="ECO:0000314"/>
    <property type="project" value="UniProtKB"/>
</dbReference>
<dbReference type="GO" id="GO:0005524">
    <property type="term" value="F:ATP binding"/>
    <property type="evidence" value="ECO:0007669"/>
    <property type="project" value="UniProtKB-KW"/>
</dbReference>
<dbReference type="GO" id="GO:0016887">
    <property type="term" value="F:ATP hydrolysis activity"/>
    <property type="evidence" value="ECO:0000314"/>
    <property type="project" value="UniProtKB"/>
</dbReference>
<dbReference type="GO" id="GO:0140658">
    <property type="term" value="F:ATP-dependent chromatin remodeler activity"/>
    <property type="evidence" value="ECO:0000314"/>
    <property type="project" value="UniProtKB"/>
</dbReference>
<dbReference type="GO" id="GO:0003682">
    <property type="term" value="F:chromatin binding"/>
    <property type="evidence" value="ECO:0000318"/>
    <property type="project" value="GO_Central"/>
</dbReference>
<dbReference type="GO" id="GO:0003677">
    <property type="term" value="F:DNA binding"/>
    <property type="evidence" value="ECO:0000318"/>
    <property type="project" value="GO_Central"/>
</dbReference>
<dbReference type="GO" id="GO:0004386">
    <property type="term" value="F:helicase activity"/>
    <property type="evidence" value="ECO:0007669"/>
    <property type="project" value="UniProtKB-KW"/>
</dbReference>
<dbReference type="GO" id="GO:0042393">
    <property type="term" value="F:histone binding"/>
    <property type="evidence" value="ECO:0000318"/>
    <property type="project" value="GO_Central"/>
</dbReference>
<dbReference type="GO" id="GO:0042826">
    <property type="term" value="F:histone deacetylase binding"/>
    <property type="evidence" value="ECO:0000353"/>
    <property type="project" value="UniProtKB"/>
</dbReference>
<dbReference type="GO" id="GO:0061629">
    <property type="term" value="F:RNA polymerase II-specific DNA-binding transcription factor binding"/>
    <property type="evidence" value="ECO:0000353"/>
    <property type="project" value="BHF-UCL"/>
</dbReference>
<dbReference type="GO" id="GO:0001221">
    <property type="term" value="F:transcription coregulator binding"/>
    <property type="evidence" value="ECO:0000353"/>
    <property type="project" value="ARUK-UCL"/>
</dbReference>
<dbReference type="GO" id="GO:0003714">
    <property type="term" value="F:transcription corepressor activity"/>
    <property type="evidence" value="ECO:0000314"/>
    <property type="project" value="UniProt"/>
</dbReference>
<dbReference type="GO" id="GO:0008270">
    <property type="term" value="F:zinc ion binding"/>
    <property type="evidence" value="ECO:0000304"/>
    <property type="project" value="ProtInc"/>
</dbReference>
<dbReference type="GO" id="GO:0006338">
    <property type="term" value="P:chromatin remodeling"/>
    <property type="evidence" value="ECO:0000314"/>
    <property type="project" value="ComplexPortal"/>
</dbReference>
<dbReference type="GO" id="GO:0000724">
    <property type="term" value="P:double-strand break repair via homologous recombination"/>
    <property type="evidence" value="ECO:0000315"/>
    <property type="project" value="UniProtKB"/>
</dbReference>
<dbReference type="GO" id="GO:0045892">
    <property type="term" value="P:negative regulation of DNA-templated transcription"/>
    <property type="evidence" value="ECO:0000303"/>
    <property type="project" value="ComplexPortal"/>
</dbReference>
<dbReference type="GO" id="GO:0010629">
    <property type="term" value="P:negative regulation of gene expression"/>
    <property type="evidence" value="ECO:0000314"/>
    <property type="project" value="UniProt"/>
</dbReference>
<dbReference type="GO" id="GO:0000122">
    <property type="term" value="P:negative regulation of transcription by RNA polymerase II"/>
    <property type="evidence" value="ECO:0007669"/>
    <property type="project" value="Ensembl"/>
</dbReference>
<dbReference type="GO" id="GO:0045893">
    <property type="term" value="P:positive regulation of DNA-templated transcription"/>
    <property type="evidence" value="ECO:0000303"/>
    <property type="project" value="ComplexPortal"/>
</dbReference>
<dbReference type="GO" id="GO:0042659">
    <property type="term" value="P:regulation of cell fate specification"/>
    <property type="evidence" value="ECO:0000303"/>
    <property type="project" value="ComplexPortal"/>
</dbReference>
<dbReference type="GO" id="GO:2000736">
    <property type="term" value="P:regulation of stem cell differentiation"/>
    <property type="evidence" value="ECO:0000303"/>
    <property type="project" value="ComplexPortal"/>
</dbReference>
<dbReference type="GO" id="GO:0051963">
    <property type="term" value="P:regulation of synapse assembly"/>
    <property type="evidence" value="ECO:0007669"/>
    <property type="project" value="Ensembl"/>
</dbReference>
<dbReference type="GO" id="GO:0072553">
    <property type="term" value="P:terminal button organization"/>
    <property type="evidence" value="ECO:0007669"/>
    <property type="project" value="Ensembl"/>
</dbReference>
<dbReference type="CDD" id="cd18667">
    <property type="entry name" value="CD1_tandem_CHD3-4_like"/>
    <property type="match status" value="1"/>
</dbReference>
<dbReference type="CDD" id="cd18662">
    <property type="entry name" value="CD2_tandem_CHD3-4_like"/>
    <property type="match status" value="1"/>
</dbReference>
<dbReference type="CDD" id="cd18056">
    <property type="entry name" value="DEXHc_CHD4"/>
    <property type="match status" value="1"/>
</dbReference>
<dbReference type="CDD" id="cd15531">
    <property type="entry name" value="PHD1_CHD_II"/>
    <property type="match status" value="1"/>
</dbReference>
<dbReference type="CDD" id="cd15532">
    <property type="entry name" value="PHD2_CHD_II"/>
    <property type="match status" value="1"/>
</dbReference>
<dbReference type="CDD" id="cd18793">
    <property type="entry name" value="SF2_C_SNF"/>
    <property type="match status" value="1"/>
</dbReference>
<dbReference type="FunFam" id="1.10.10.60:FF:000037">
    <property type="entry name" value="chromodomain-helicase-DNA-binding protein 3 isoform X1"/>
    <property type="match status" value="1"/>
</dbReference>
<dbReference type="FunFam" id="2.40.50.40:FF:000003">
    <property type="entry name" value="chromodomain-helicase-DNA-binding protein 3 isoform X1"/>
    <property type="match status" value="1"/>
</dbReference>
<dbReference type="FunFam" id="3.30.40.10:FF:000001">
    <property type="entry name" value="chromodomain-helicase-DNA-binding protein 3 isoform X1"/>
    <property type="match status" value="1"/>
</dbReference>
<dbReference type="FunFam" id="3.40.50.10810:FF:000001">
    <property type="entry name" value="chromodomain-helicase-DNA-binding protein 3 isoform X1"/>
    <property type="match status" value="1"/>
</dbReference>
<dbReference type="FunFam" id="3.30.40.10:FF:000011">
    <property type="entry name" value="chromodomain-helicase-DNA-binding protein 4 isoform X1"/>
    <property type="match status" value="1"/>
</dbReference>
<dbReference type="FunFam" id="2.40.50.40:FF:000011">
    <property type="entry name" value="chromodomain-helicase-DNA-binding protein 4 isoform X2"/>
    <property type="match status" value="1"/>
</dbReference>
<dbReference type="FunFam" id="3.40.50.300:FF:000015">
    <property type="entry name" value="chromodomain-helicase-DNA-binding protein 9 isoform X1"/>
    <property type="match status" value="1"/>
</dbReference>
<dbReference type="Gene3D" id="2.40.50.40">
    <property type="match status" value="2"/>
</dbReference>
<dbReference type="Gene3D" id="1.10.10.60">
    <property type="entry name" value="Homeodomain-like"/>
    <property type="match status" value="1"/>
</dbReference>
<dbReference type="Gene3D" id="3.40.50.300">
    <property type="entry name" value="P-loop containing nucleotide triphosphate hydrolases"/>
    <property type="match status" value="1"/>
</dbReference>
<dbReference type="Gene3D" id="3.40.50.10810">
    <property type="entry name" value="Tandem AAA-ATPase domain"/>
    <property type="match status" value="1"/>
</dbReference>
<dbReference type="Gene3D" id="3.30.40.10">
    <property type="entry name" value="Zinc/RING finger domain, C3HC4 (zinc finger)"/>
    <property type="match status" value="2"/>
</dbReference>
<dbReference type="IDEAL" id="IID00322"/>
<dbReference type="InterPro" id="IPR012957">
    <property type="entry name" value="CHD_C2"/>
</dbReference>
<dbReference type="InterPro" id="IPR009462">
    <property type="entry name" value="CHD_II_SANT-like"/>
</dbReference>
<dbReference type="InterPro" id="IPR012958">
    <property type="entry name" value="CHD_N"/>
</dbReference>
<dbReference type="InterPro" id="IPR016197">
    <property type="entry name" value="Chromo-like_dom_sf"/>
</dbReference>
<dbReference type="InterPro" id="IPR000953">
    <property type="entry name" value="Chromo/chromo_shadow_dom"/>
</dbReference>
<dbReference type="InterPro" id="IPR023780">
    <property type="entry name" value="Chromo_domain"/>
</dbReference>
<dbReference type="InterPro" id="IPR002464">
    <property type="entry name" value="DNA/RNA_helicase_DEAH_CS"/>
</dbReference>
<dbReference type="InterPro" id="IPR009463">
    <property type="entry name" value="DUF1087"/>
</dbReference>
<dbReference type="InterPro" id="IPR014001">
    <property type="entry name" value="Helicase_ATP-bd"/>
</dbReference>
<dbReference type="InterPro" id="IPR001650">
    <property type="entry name" value="Helicase_C-like"/>
</dbReference>
<dbReference type="InterPro" id="IPR027417">
    <property type="entry name" value="P-loop_NTPase"/>
</dbReference>
<dbReference type="InterPro" id="IPR038718">
    <property type="entry name" value="SNF2-like_sf"/>
</dbReference>
<dbReference type="InterPro" id="IPR049730">
    <property type="entry name" value="SNF2/RAD54-like_C"/>
</dbReference>
<dbReference type="InterPro" id="IPR000330">
    <property type="entry name" value="SNF2_N"/>
</dbReference>
<dbReference type="InterPro" id="IPR019786">
    <property type="entry name" value="Zinc_finger_PHD-type_CS"/>
</dbReference>
<dbReference type="InterPro" id="IPR011011">
    <property type="entry name" value="Znf_FYVE_PHD"/>
</dbReference>
<dbReference type="InterPro" id="IPR001965">
    <property type="entry name" value="Znf_PHD"/>
</dbReference>
<dbReference type="InterPro" id="IPR019787">
    <property type="entry name" value="Znf_PHD-finger"/>
</dbReference>
<dbReference type="InterPro" id="IPR013083">
    <property type="entry name" value="Znf_RING/FYVE/PHD"/>
</dbReference>
<dbReference type="PANTHER" id="PTHR45623">
    <property type="entry name" value="CHROMODOMAIN-HELICASE-DNA-BINDING PROTEIN 3-RELATED-RELATED"/>
    <property type="match status" value="1"/>
</dbReference>
<dbReference type="PANTHER" id="PTHR45623:SF22">
    <property type="entry name" value="CHROMODOMAIN-HELICASE-DNA-BINDING PROTEIN 4"/>
    <property type="match status" value="1"/>
</dbReference>
<dbReference type="Pfam" id="PF08074">
    <property type="entry name" value="CHDCT2"/>
    <property type="match status" value="1"/>
</dbReference>
<dbReference type="Pfam" id="PF06461">
    <property type="entry name" value="CHDII_SANT-like"/>
    <property type="match status" value="1"/>
</dbReference>
<dbReference type="Pfam" id="PF08073">
    <property type="entry name" value="CHDNT"/>
    <property type="match status" value="1"/>
</dbReference>
<dbReference type="Pfam" id="PF00385">
    <property type="entry name" value="Chromo"/>
    <property type="match status" value="1"/>
</dbReference>
<dbReference type="Pfam" id="PF06465">
    <property type="entry name" value="DUF1087"/>
    <property type="match status" value="1"/>
</dbReference>
<dbReference type="Pfam" id="PF00271">
    <property type="entry name" value="Helicase_C"/>
    <property type="match status" value="1"/>
</dbReference>
<dbReference type="Pfam" id="PF00628">
    <property type="entry name" value="PHD"/>
    <property type="match status" value="2"/>
</dbReference>
<dbReference type="Pfam" id="PF00176">
    <property type="entry name" value="SNF2-rel_dom"/>
    <property type="match status" value="1"/>
</dbReference>
<dbReference type="SMART" id="SM00298">
    <property type="entry name" value="CHROMO"/>
    <property type="match status" value="2"/>
</dbReference>
<dbReference type="SMART" id="SM00487">
    <property type="entry name" value="DEXDc"/>
    <property type="match status" value="1"/>
</dbReference>
<dbReference type="SMART" id="SM01146">
    <property type="entry name" value="DUF1086"/>
    <property type="match status" value="1"/>
</dbReference>
<dbReference type="SMART" id="SM01147">
    <property type="entry name" value="DUF1087"/>
    <property type="match status" value="1"/>
</dbReference>
<dbReference type="SMART" id="SM00490">
    <property type="entry name" value="HELICc"/>
    <property type="match status" value="1"/>
</dbReference>
<dbReference type="SMART" id="SM00249">
    <property type="entry name" value="PHD"/>
    <property type="match status" value="2"/>
</dbReference>
<dbReference type="SUPFAM" id="SSF54160">
    <property type="entry name" value="Chromo domain-like"/>
    <property type="match status" value="2"/>
</dbReference>
<dbReference type="SUPFAM" id="SSF57903">
    <property type="entry name" value="FYVE/PHD zinc finger"/>
    <property type="match status" value="1"/>
</dbReference>
<dbReference type="SUPFAM" id="SSF52540">
    <property type="entry name" value="P-loop containing nucleoside triphosphate hydrolases"/>
    <property type="match status" value="2"/>
</dbReference>
<dbReference type="PROSITE" id="PS00598">
    <property type="entry name" value="CHROMO_1"/>
    <property type="match status" value="2"/>
</dbReference>
<dbReference type="PROSITE" id="PS50013">
    <property type="entry name" value="CHROMO_2"/>
    <property type="match status" value="2"/>
</dbReference>
<dbReference type="PROSITE" id="PS00690">
    <property type="entry name" value="DEAH_ATP_HELICASE"/>
    <property type="match status" value="1"/>
</dbReference>
<dbReference type="PROSITE" id="PS51192">
    <property type="entry name" value="HELICASE_ATP_BIND_1"/>
    <property type="match status" value="1"/>
</dbReference>
<dbReference type="PROSITE" id="PS51194">
    <property type="entry name" value="HELICASE_CTER"/>
    <property type="match status" value="1"/>
</dbReference>
<dbReference type="PROSITE" id="PS01359">
    <property type="entry name" value="ZF_PHD_1"/>
    <property type="match status" value="2"/>
</dbReference>
<dbReference type="PROSITE" id="PS50016">
    <property type="entry name" value="ZF_PHD_2"/>
    <property type="match status" value="2"/>
</dbReference>
<organism>
    <name type="scientific">Homo sapiens</name>
    <name type="common">Human</name>
    <dbReference type="NCBI Taxonomy" id="9606"/>
    <lineage>
        <taxon>Eukaryota</taxon>
        <taxon>Metazoa</taxon>
        <taxon>Chordata</taxon>
        <taxon>Craniata</taxon>
        <taxon>Vertebrata</taxon>
        <taxon>Euteleostomi</taxon>
        <taxon>Mammalia</taxon>
        <taxon>Eutheria</taxon>
        <taxon>Euarchontoglires</taxon>
        <taxon>Primates</taxon>
        <taxon>Haplorrhini</taxon>
        <taxon>Catarrhini</taxon>
        <taxon>Hominidae</taxon>
        <taxon>Homo</taxon>
    </lineage>
</organism>
<name>CHD4_HUMAN</name>
<sequence>MASGLGSPSPCSAGSEEEDMDALLNNSLPPPHPENEEDPEEDLSETETPKLKKKKKPKKPRDPKIPKSKRQKKERMLLCRQLGDSSGEGPEFVEEEEEVALRSDSEGSDYTPGKKKKKKLGPKKEKKSKSKRKEEEEEEDDDDDSKEPKSSAQLLEDWGMEDIDHVFSEEDYRTLTNYKAFSQFVRPLIAAKNPKIAVSKMMMVLGAKWREFSTNNPFKGSSGASVAAAAAAAVAVVESMVTATEVAPPPPPVEVPIRKAKTKEGKGPNARRKPKGSPRVPDAKKPKPKKVAPLKIKLGGFGSKRKRSSSEDDDLDVESDFDDASINSYSVSDGSTSRSSRSRKKLRTTKKKKKGEEEVTAVDGYETDHQDYCEVCQQGGEIILCDTCPRAYHMVCLDPDMEKAPEGKWSCPHCEKEGIQWEAKEDNSEGEEILEEVGGDLEEEDDHHMEFCRVCKDGGELLCCDTCPSSYHIHCLNPPLPEIPNGEWLCPRCTCPALKGKVQKILIWKWGQPPSPTPVPRPPDADPNTPSPKPLEGRPERQFFVKWQGMSYWHCSWVSELQLELHCQVMFRNYQRKNDMDEPPSGDFGGDEEKSRKRKNKDPKFAEMEERFYRYGIKPEWMMIHRILNHSVDKKGHVHYLIKWRDLPYDQASWESEDVEIQDYDLFKQSYWNHRELMRGEEGRPGKKLKKVKLRKLERPPETPTVDPTVKYERQPEYLDATGGTLHPYQMEGLNWLRFSWAQGTDTILADEMGLGKTVQTAVFLYSLYKEGHSKGPFLVSAPLSTIINWEREFEMWAPDMYVVTYVGDKDSRAIIRENEFSFEDNAIRGGKKASRMKKEASVKFHVLLTSYELITIDMAILGSIDWACLIVDEAHRLKNNQSKFFRVLNGYSLQHKLLLTGTPLQNNLEELFHLLNFLTPERFHNLEGFLEEFADIAKEDQIKKLHDMLGPHMLRRLKADVFKNMPSKTELIVRVELSPMQKKYYKYILTRNFEALNARGGGNQVSLLNVVMDLKKCCNHPYLFPVAAMEAPKMPNGMYDGSALIRASGKLLLLQKMLKNLKEGGHRVLIFSQMTKMLDLLEDFLEHEGYKYERIDGGITGNMRQEAIDRFNAPGAQQFCFLLSTRAGGLGINLATADTVIIYDSDWNPHNDIQAFSRAHRIGQNKKVMIYRFVTRASVEERITQVAKKKMMLTHLVVRPGLGSKTGSMSKQELDDILKFGTEELFKDEATDGGGDNKEGEDSSVIHYDDKAIERLLDRNQDETEDTELQGMNEYLSSFKVAQYVVREEEMGEEEEVEREIIKQEESVDPDYWEKLLRHHYEQQQEDLARNLGKGKRIRKQVNYNDGSQEDRDWQDDQSDNQSDYSVASEEGDEDFDERSEAPRRPSRKGLRNDKDKPLPPLLARVGGNIEVLGFNARQRKAFLNAIMRYGMPPQDAFTTQWLVRDLRGKSEKEFKAYVSLFMRHLCEPGADGAETFADGVPREGLSRQHVLTRIGVMSLIRKKVQEFEHVNGRWSMPELAEVEENKKMSQPGSPSPKTPTPSTPGDTQPNTPAPVPPAEDGIKIEENSLKEEESIEGEKEVKSTAPETAIECTQAPAPASEDEKVVVEPPEGEEKVEKAEVKERTEEPMETEPKGAADVEKVEEKSAIDLTPIVVEDKEEKKEEEEKKEVMLQNGETPKDLNDEKQKKNIKQRFMFNIADGGFTELHSLWQNEERAATVTKKTYEIWHRRHDYWLLAGIINHGYARWQDIQNDPRYAILNEPFKGEMNRGNFLEIKNKFLARRFKLLEQALVIEEQLRRAAYLNMSEDPSHPSMALNTRFAEVECLAESHQHLSKESMAGNKPANAVLHKVLKQLEELLSDMKADVTRLPATIARIPPVAVRLQMSERNILSRLANRAPEPTPQQVAQQQ</sequence>
<evidence type="ECO:0000250" key="1">
    <source>
        <dbReference type="UniProtKB" id="Q12873"/>
    </source>
</evidence>
<evidence type="ECO:0000250" key="2">
    <source>
        <dbReference type="UniProtKB" id="Q6PDQ2"/>
    </source>
</evidence>
<evidence type="ECO:0000255" key="3">
    <source>
        <dbReference type="PROSITE-ProRule" id="PRU00053"/>
    </source>
</evidence>
<evidence type="ECO:0000255" key="4">
    <source>
        <dbReference type="PROSITE-ProRule" id="PRU00146"/>
    </source>
</evidence>
<evidence type="ECO:0000255" key="5">
    <source>
        <dbReference type="PROSITE-ProRule" id="PRU00541"/>
    </source>
</evidence>
<evidence type="ECO:0000255" key="6">
    <source>
        <dbReference type="PROSITE-ProRule" id="PRU00542"/>
    </source>
</evidence>
<evidence type="ECO:0000256" key="7">
    <source>
        <dbReference type="SAM" id="MobiDB-lite"/>
    </source>
</evidence>
<evidence type="ECO:0000269" key="8">
    <source>
    </source>
</evidence>
<evidence type="ECO:0000269" key="9">
    <source>
    </source>
</evidence>
<evidence type="ECO:0000269" key="10">
    <source>
    </source>
</evidence>
<evidence type="ECO:0000269" key="11">
    <source>
    </source>
</evidence>
<evidence type="ECO:0000269" key="12">
    <source>
    </source>
</evidence>
<evidence type="ECO:0000269" key="13">
    <source>
    </source>
</evidence>
<evidence type="ECO:0000269" key="14">
    <source>
    </source>
</evidence>
<evidence type="ECO:0000269" key="15">
    <source>
    </source>
</evidence>
<evidence type="ECO:0000269" key="16">
    <source>
    </source>
</evidence>
<evidence type="ECO:0000269" key="17">
    <source>
    </source>
</evidence>
<evidence type="ECO:0000269" key="18">
    <source>
    </source>
</evidence>
<evidence type="ECO:0000269" key="19">
    <source>
    </source>
</evidence>
<evidence type="ECO:0000269" key="20">
    <source>
    </source>
</evidence>
<evidence type="ECO:0000269" key="21">
    <source>
    </source>
</evidence>
<evidence type="ECO:0000269" key="22">
    <source>
    </source>
</evidence>
<evidence type="ECO:0000269" key="23">
    <source>
    </source>
</evidence>
<evidence type="ECO:0000269" key="24">
    <source>
    </source>
</evidence>
<evidence type="ECO:0000269" key="25">
    <source>
    </source>
</evidence>
<evidence type="ECO:0000269" key="26">
    <source>
    </source>
</evidence>
<evidence type="ECO:0000269" key="27">
    <source>
    </source>
</evidence>
<evidence type="ECO:0000269" key="28">
    <source>
    </source>
</evidence>
<evidence type="ECO:0000269" key="29">
    <source>
    </source>
</evidence>
<evidence type="ECO:0000303" key="30">
    <source>
    </source>
</evidence>
<evidence type="ECO:0000305" key="31"/>
<evidence type="ECO:0007744" key="32">
    <source>
        <dbReference type="PDB" id="1MM2"/>
    </source>
</evidence>
<evidence type="ECO:0007744" key="33">
    <source>
        <dbReference type="PDB" id="1MM3"/>
    </source>
</evidence>
<evidence type="ECO:0007744" key="34">
    <source>
        <dbReference type="PDB" id="6BGG"/>
    </source>
</evidence>
<evidence type="ECO:0007744" key="35">
    <source>
        <dbReference type="PDB" id="6RYR"/>
    </source>
</evidence>
<evidence type="ECO:0007744" key="36">
    <source>
        <dbReference type="PDB" id="6RYU"/>
    </source>
</evidence>
<evidence type="ECO:0007744" key="37">
    <source>
    </source>
</evidence>
<evidence type="ECO:0007744" key="38">
    <source>
    </source>
</evidence>
<evidence type="ECO:0007744" key="39">
    <source>
    </source>
</evidence>
<evidence type="ECO:0007744" key="40">
    <source>
    </source>
</evidence>
<evidence type="ECO:0007744" key="41">
    <source>
    </source>
</evidence>
<evidence type="ECO:0007744" key="42">
    <source>
    </source>
</evidence>
<evidence type="ECO:0007744" key="43">
    <source>
    </source>
</evidence>
<evidence type="ECO:0007744" key="44">
    <source>
    </source>
</evidence>
<evidence type="ECO:0007744" key="45">
    <source>
    </source>
</evidence>
<evidence type="ECO:0007744" key="46">
    <source>
    </source>
</evidence>
<evidence type="ECO:0007744" key="47">
    <source>
    </source>
</evidence>
<evidence type="ECO:0007744" key="48">
    <source>
    </source>
</evidence>
<evidence type="ECO:0007744" key="49">
    <source>
    </source>
</evidence>
<evidence type="ECO:0007744" key="50">
    <source>
    </source>
</evidence>
<evidence type="ECO:0007829" key="51">
    <source>
        <dbReference type="PDB" id="1MM3"/>
    </source>
</evidence>
<evidence type="ECO:0007829" key="52">
    <source>
        <dbReference type="PDB" id="2L5U"/>
    </source>
</evidence>
<evidence type="ECO:0007829" key="53">
    <source>
        <dbReference type="PDB" id="2L75"/>
    </source>
</evidence>
<evidence type="ECO:0007829" key="54">
    <source>
        <dbReference type="PDB" id="2N5N"/>
    </source>
</evidence>
<evidence type="ECO:0007829" key="55">
    <source>
        <dbReference type="PDB" id="4O9I"/>
    </source>
</evidence>
<evidence type="ECO:0007829" key="56">
    <source>
        <dbReference type="PDB" id="6BGG"/>
    </source>
</evidence>
<evidence type="ECO:0007829" key="57">
    <source>
        <dbReference type="PDB" id="6Q3M"/>
    </source>
</evidence>
<evidence type="ECO:0007829" key="58">
    <source>
        <dbReference type="PDB" id="6RYR"/>
    </source>
</evidence>
<evidence type="ECO:0007829" key="59">
    <source>
        <dbReference type="PDB" id="8D4Y"/>
    </source>
</evidence>